<organism>
    <name type="scientific">Homo sapiens</name>
    <name type="common">Human</name>
    <dbReference type="NCBI Taxonomy" id="9606"/>
    <lineage>
        <taxon>Eukaryota</taxon>
        <taxon>Metazoa</taxon>
        <taxon>Chordata</taxon>
        <taxon>Craniata</taxon>
        <taxon>Vertebrata</taxon>
        <taxon>Euteleostomi</taxon>
        <taxon>Mammalia</taxon>
        <taxon>Eutheria</taxon>
        <taxon>Euarchontoglires</taxon>
        <taxon>Primates</taxon>
        <taxon>Haplorrhini</taxon>
        <taxon>Catarrhini</taxon>
        <taxon>Hominidae</taxon>
        <taxon>Homo</taxon>
    </lineage>
</organism>
<proteinExistence type="evidence at protein level"/>
<comment type="function">
    <text evidence="7 10 13 14 15 17">Regulatory subunit of the ATP-dependent NURF-1 and NURF-5 ISWI chromatin remodeling complexes, which form ordered nucleosome arrays on chromatin and facilitate access to DNA during DNA-templated processes such as DNA replication, transcription, and repair (PubMed:14609955, PubMed:28801535). The NURF-1 ISWI chromatin remodeling complex has a lower ATP hydrolysis rate than the NURF-5 ISWI chromatin remodeling complex (PubMed:28801535). Within the NURF-1 ISWI chromatin-remodeling complex, binds to the promoters of En1 and En2 to positively regulate their expression and promote brain development (PubMed:14609955). Histone-binding protein which binds to H3 tails trimethylated on 'Lys-4' (H3K4me3), which mark transcription start sites of active genes (PubMed:16728976, PubMed:16728978). Binds to histone H3 tails dimethylated on 'Lys-4' (H3K4Me2) to a lesser extent (PubMed:16728976, PubMed:16728978, PubMed:18042461). May also regulate transcription through direct binding to DNA or transcription factors (PubMed:10575013).</text>
</comment>
<comment type="subunit">
    <text evidence="9 10 11 12 17">Interacts with MAZ (PubMed:10727212). Interacts with KEAP1 (PubMed:15379550). Component of the NURF-1 ISWI chromatin remodeling complex (also called the nucleosome-remodeling factor (NURF) complex) at least composed of SMARCA1 (isoform 2), BPTF, RBBP4 and RBBP7 (PubMed:14609955, PubMed:28801535). Within the complex interacts with isoform 2 of SMARCA1 (PubMed:14609955, PubMed:15310751, PubMed:28801535). Component of the BPFT-SMARCA1 complex at least composed of SMARCA1 (isoform 1), BPFT, RBBP4 and RBBP7; the complex is catalytically inactive and does not remodel chromatin (PubMed:15310751). Within the complex interacts with isoform 1 of SMARCA1 (PubMed:15310751). Component of the NURF-5 ISWI chromatin remodeling complex at least composed of SMARCA5/SNF2H and BPTF (PubMed:28801535). Within NURF-5 ISWI chromatin remodeling complex interacts with SMARCA5/SNF2H (PubMed:28801535).</text>
</comment>
<comment type="interaction">
    <interactant intactId="EBI-1560273">
        <id>Q12830</id>
    </interactant>
    <interactant intactId="EBI-302023">
        <id>P62805</id>
        <label>H4C9</label>
    </interactant>
    <organismsDiffer>false</organismsDiffer>
    <experiments>3</experiments>
</comment>
<comment type="interaction">
    <interactant intactId="EBI-1560273">
        <id>Q12830</id>
    </interactant>
    <interactant intactId="EBI-2822460">
        <id>P28370</id>
        <label>SMARCA1</label>
    </interactant>
    <organismsDiffer>false</organismsDiffer>
    <experiments>7</experiments>
</comment>
<comment type="interaction">
    <interactant intactId="EBI-1560273">
        <id>Q12830</id>
    </interactant>
    <interactant intactId="EBI-352588">
        <id>O60264</id>
        <label>SMARCA5</label>
    </interactant>
    <organismsDiffer>false</organismsDiffer>
    <experiments>2</experiments>
</comment>
<comment type="interaction">
    <interactant intactId="EBI-4288838">
        <id>Q12830-4</id>
    </interactant>
    <interactant intactId="EBI-750650">
        <id>Q71DI3</id>
        <label>H3C15</label>
    </interactant>
    <organismsDiffer>false</organismsDiffer>
    <experiments>2</experiments>
</comment>
<comment type="interaction">
    <interactant intactId="EBI-4288838">
        <id>Q12830-4</id>
    </interactant>
    <interactant intactId="EBI-302023">
        <id>P62805</id>
        <label>H4C9</label>
    </interactant>
    <organismsDiffer>false</organismsDiffer>
    <experiments>16</experiments>
</comment>
<comment type="subcellular location">
    <subcellularLocation>
        <location evidence="12">Cytoplasm</location>
    </subcellularLocation>
    <subcellularLocation>
        <location evidence="9 16 20">Nucleus</location>
    </subcellularLocation>
    <text evidence="9 16">Localizes to sites of DNA damage (PubMed:25593309). In brains of Alzheimer disease patients, present in a subset of amyloid-containing plaques (PubMed:10727212).</text>
</comment>
<comment type="alternative products">
    <event type="alternative splicing"/>
    <isoform>
        <id>Q12830-1</id>
        <name>1</name>
        <sequence type="displayed"/>
    </isoform>
    <isoform>
        <id>Q12830-2</id>
        <name>2</name>
        <sequence type="described" ref="VSP_020402"/>
    </isoform>
    <isoform>
        <id>Q12830-4</id>
        <name>4</name>
        <sequence type="described" ref="VSP_020405"/>
    </isoform>
</comment>
<comment type="tissue specificity">
    <text evidence="8 9 19 20">Ubiquitously expressed, with highest levels in testis. Present in kidney, liver and brain. In the brain, highest levels are found in motor cortex (at protein level).</text>
</comment>
<comment type="developmental stage">
    <text evidence="20">Abundantly expressed in the fetal brain. Present throughout the gray and white matter of the developing spinal cord at 18-22 gestational weeks. Expressed at low levels in adult brain and spinal cord and reexpressed in neurodegenerative diseases (at protein level).</text>
</comment>
<comment type="domain">
    <text evidence="15">The second PHD-type zinc finger mediates binding to histone H3K4Me3. Has specificity for trimethyllysine; introducing a mutation in the Tyr-2876 residue can induce binding to dimethyllysine.</text>
</comment>
<comment type="PTM">
    <text evidence="6">Phosphorylation enhances DNA-binding.</text>
</comment>
<comment type="PTM">
    <text>Highly susceptible to proteolysis.</text>
</comment>
<comment type="disease" evidence="18">
    <disease id="DI-05137">
        <name>Neurodevelopmental disorder with dysmorphic facies and distal limb anomalies</name>
        <acronym>NEDDFL</acronym>
        <description>An autosomal dominant neurodevelopmental disorder characterized by variable degrees of developmental delay, intellectual disability, speech delay, postnatal microcephaly, dysmorphic features, and mild abnormalities of the hands and feet.</description>
        <dbReference type="MIM" id="617755"/>
    </disease>
    <text>The disease is caused by variants affecting the gene represented in this entry.</text>
</comment>
<comment type="similarity">
    <text evidence="23">Belongs to the PBTF family.</text>
</comment>
<comment type="sequence caution" evidence="23">
    <conflict type="frameshift">
        <sequence resource="EMBL-CDS" id="AAA97522"/>
    </conflict>
</comment>
<comment type="sequence caution" evidence="23">
    <conflict type="miscellaneous discrepancy">
        <sequence resource="EMBL-CDS" id="AAA97522"/>
    </conflict>
    <text>Several sequencing errors.</text>
</comment>
<comment type="sequence caution" evidence="23">
    <conflict type="miscellaneous discrepancy">
        <sequence resource="EMBL-CDS" id="BAA89208"/>
    </conflict>
    <text>Several sequencing errors in the N-terminal part.</text>
</comment>
<sequence>MRGRRGRPPKQPAAPAAERCAPAPPPPPPPPTSGPIGGLRSRHRGSSRGRWAAAQAEVAPKTRLSSPRGGSSSRRKPPPPPPAPPSTSAPGRGGRGGGGGRTGGGGGGGHLARTTAARRAVNKVVYDDHESEEEEEEEDMVSEEEEEEDGDAEETQDSEDDEEDEMEEDDDDSDYPEEMEDDDDDASYCTESSFRSHSTYSSTPGRRKPRVHRPRSPILEEKDIPPLEFPKSSEDLMVPNEHIMNVIAIYEVLRNFGTVLRLSPFRFEDFCAALVSQEQCTLMAEMHVVLLKAVLREEDTSNTTFGPADLKDSVNSTLYFIDGMTWPEVLRVYCESDKEYHHVLPYQEAEDYPYGPVENKIKVLQFLVDQFLTTNIAREELMSEGVIQYDDHCRVCHKLGDLLCCETCSAVYHLECVKPPLEEVPEDEWQCEVCVAHKVPGVTDCVAEIQKNKPYIRHEPIGYDRSRRKYWFLNRRLIIEEDTENENEKKIWYYSTKVQLAELIDCLDKDYWEAELCKILEEMREEIHRHMDITEDLTNKARGSNKSFLAAANEEILESIRAKKGDIDNVKSPEETEKDKNETENDSKDAEKNREEFEDQSLEKDSDDKTPDDDPEQGKSEEPTEVGDKGNSVSANLGDNTTNATSEETSPSEGRSPVGCLSETPDSSNMAEKKVASELPQDVPEEPNKTCESSNTSATTTSIQPNLENSNSSSELNSSQSESAKAADDPENGERESHTPVSIQEEIVGDFKSEKSNGELSESPGAGKGASGSTRIITRLRNPDSKLSQLKSQQVAAAAHEANKLFKEGKEVLVVNSQGEISRLSTKKEVIMKGNINNYFKLGQEGKYRVYHNQYSTNSFALNKHQHREDHDKRRHLAHKFCLTPAGEFKWNGSVHGSKVLTISTLRLTITQLENNIPSSFLHPNWASHRANWIKAVQMCSKPREFALALAILECAVKPVVMLPIWRESLGHTRLHRMTSIEREEKEKVKKKEKKQEEEETMQQATWVKYTFPVKHQVWKQKGEEYRVTGYGGWSWISKTHVYRFVPKLPGNTNVNYRKSLEGTKNNMDENMDESDKRKCSRSPKKIKIEPDSEKDEVKGSDAAKGADQNEMDISKITEKKDQDVKELLDSDSDKPCKEEPMEVDDDMKTESHVNCQESSQVDVVNVSEGFHLRTSYKKKTKSSKLDGLLERRIKQFTLEEKQRLEKIKLEGGIKGIGKTSTNSSKNLSESPVITKAKEGCQSDSMRQEQSPNANNDQPEDLIQGCSESDSSVLRMSDPSHTTNKLYPKDRVLDDVSIRSPETKCPKQNSIENDIEEKVSDLASRGQEPSKSKTKGNDFFIDDSKLASADDIGTLICKNKKPLIQEESDTIVSSSKSALHSSVPKSTNDRDATPLSRAMDFEGKLGCDSESNSTLENSSDTVSIQDSSEEDMIVQNSNESISEQFRTREQDVEVLEPLKCELVSGESTGNCEDRLPVKGTEANGKKPSQQKKLEERPVNKCSDQIKLKNTTDKKNNENRESEKKGQRTSTFQINGKDNKPKIYLKGECLKEISESRVVSGNVEPKVNNINKIIPENDIKSLTVKESAIRPFINGDVIMEDFNERNSSETKSHLLSSSDAEGNYRDSLETLPSTKESDSTQTTTPSASCPESNSVNQVEDMEIETSEVKKVTSSPITSEEESNLSNDFIDENGLPINKNENVNGESKRKTVITEVTTMTSTVATESKTVIKVEKGDKQTVVSSTENCAKSTVTTTTTTVTKLSTPSTGGSVDIISVKEQSKTVVTTTVTDSLTTTGGTLVTSMTVSKEYSTRDKVKLMKFSRPKKTRSGTALPSYRKFVTKSSKKSIFVLPNDDLKKLARKGGIREVPYFNYNAKPALDIWPYPSPRPTFGITWRYRLQTVKSLAGVSLMLRLLWASLRWDDMAAKAPPGGGTTRTETSETEITTTEIIKRRDVGPYGIRSEYCIRKIICPIGVPETPKETPTPQRKGLRSSALRPKRPETPKQTGPVIIETWVAEEELELWEIRAFAERVEKEKAQAVEQQAKKRLEQQKPTVIATSTTSPTSSTTSTISPAQKVMVAPISGSVTTGTKMVLTTKVGSPATVTFQQNKNFHQTFATWVKQGQSNSGVVQVQQKVLGIIPSSTGTSQQTFTSFQPRTATVTIRPNTSGSGGTTSNSQVITGPQIRPGMTVIRTPLQQSTLGKAIIRTPVMVQPGAPQQVMTQIIRGQPVSTAVSAPNTVSSTPGQKSLTSATSTSNIQSSASQPPRPQQGQVKLTMAQLTQLTQGHGGNQGLTVVIQGQGQTTGQLQLIPQGVTVLPGPGQQLMQAAMPNGTVQRFLFTPLATTATTASTTTTTVSTTAAGTGEQRQSKLSPQMQVHQDKTLPPAQSSSVGPAEAQPQTAQPSAQPQPQTQPQSPAQPEVQTQPEVQTQTTVSSHVPSEAQPTHAQSSKPQVAAQSQPQSNVQGQSPVRVQSPSQTRIRPSTPSQLSPGQQSQVQTTTSQPIPIQPHTSLQIPSQGQPQSQPQVQSSTQTLSSGQTLNQVTVSSPSRPQLQIQQPQPQVIAVPQLQQQVQVLSQIQSQVVAQIQAQQSGVPQQIKLQLPIQIQQSSAVQTHQIQNVVTVQAASVQEQLQRVQQLRDQQQKKKQQQIEIKREHTLQASNQSEIIQKQVVMKHNAVIEHLKQKKSMTPAEREENQRMIVCNQVMKYILDKIDKEEKQAAKKRKREESVEQKRSKQNATKLSALLFKHKEQLRAEILKKRALLDKDLQIEVQEELKRDLKIKKEKDLMQLAQATAVAAPCPPVTPAPPAPPAPPPSPPPPPAVQHTGLLSTPTLPAASQKRKREEEKDSSSKSKKKKMISTTSKETKKDTKLYCICKTPYDESKFYIGCDRCQNWYHGRCVGILQSEAELIDEYVCPQCQSTEDAMTVLTPLTEKDYEGLKRVLRSLQAHKMAWPFLEPVDPNDAPDYYGVIKEPMDLATMEERVQRRYYEKLTEFVADMTKIFDNCRYYNPSDSPFYQCAEVLESFFVQKLKGFKASRSHNNKLQSTAS</sequence>
<name>BPTF_HUMAN</name>
<reference key="1">
    <citation type="journal article" date="2000" name="Genomics">
        <title>Identification and characterization of BPTF, a novel bromodomain transcription factor.</title>
        <authorList>
            <person name="Jones M.H."/>
            <person name="Hamana N."/>
            <person name="Shimane M."/>
        </authorList>
    </citation>
    <scope>NUCLEOTIDE SEQUENCE [MRNA] (ISOFORM 2)</scope>
    <scope>TISSUE SPECIFICITY</scope>
</reference>
<reference key="2">
    <citation type="journal article" date="2006" name="Nature">
        <title>DNA sequence of human chromosome 17 and analysis of rearrangement in the human lineage.</title>
        <authorList>
            <person name="Zody M.C."/>
            <person name="Garber M."/>
            <person name="Adams D.J."/>
            <person name="Sharpe T."/>
            <person name="Harrow J."/>
            <person name="Lupski J.R."/>
            <person name="Nicholson C."/>
            <person name="Searle S.M."/>
            <person name="Wilming L."/>
            <person name="Young S.K."/>
            <person name="Abouelleil A."/>
            <person name="Allen N.R."/>
            <person name="Bi W."/>
            <person name="Bloom T."/>
            <person name="Borowsky M.L."/>
            <person name="Bugalter B.E."/>
            <person name="Butler J."/>
            <person name="Chang J.L."/>
            <person name="Chen C.-K."/>
            <person name="Cook A."/>
            <person name="Corum B."/>
            <person name="Cuomo C.A."/>
            <person name="de Jong P.J."/>
            <person name="DeCaprio D."/>
            <person name="Dewar K."/>
            <person name="FitzGerald M."/>
            <person name="Gilbert J."/>
            <person name="Gibson R."/>
            <person name="Gnerre S."/>
            <person name="Goldstein S."/>
            <person name="Grafham D.V."/>
            <person name="Grocock R."/>
            <person name="Hafez N."/>
            <person name="Hagopian D.S."/>
            <person name="Hart E."/>
            <person name="Norman C.H."/>
            <person name="Humphray S."/>
            <person name="Jaffe D.B."/>
            <person name="Jones M."/>
            <person name="Kamal M."/>
            <person name="Khodiyar V.K."/>
            <person name="LaButti K."/>
            <person name="Laird G."/>
            <person name="Lehoczky J."/>
            <person name="Liu X."/>
            <person name="Lokyitsang T."/>
            <person name="Loveland J."/>
            <person name="Lui A."/>
            <person name="Macdonald P."/>
            <person name="Major J.E."/>
            <person name="Matthews L."/>
            <person name="Mauceli E."/>
            <person name="McCarroll S.A."/>
            <person name="Mihalev A.H."/>
            <person name="Mudge J."/>
            <person name="Nguyen C."/>
            <person name="Nicol R."/>
            <person name="O'Leary S.B."/>
            <person name="Osoegawa K."/>
            <person name="Schwartz D.C."/>
            <person name="Shaw-Smith C."/>
            <person name="Stankiewicz P."/>
            <person name="Steward C."/>
            <person name="Swarbreck D."/>
            <person name="Venkataraman V."/>
            <person name="Whittaker C.A."/>
            <person name="Yang X."/>
            <person name="Zimmer A.R."/>
            <person name="Bradley A."/>
            <person name="Hubbard T."/>
            <person name="Birren B.W."/>
            <person name="Rogers J."/>
            <person name="Lander E.S."/>
            <person name="Nusbaum C."/>
        </authorList>
    </citation>
    <scope>NUCLEOTIDE SEQUENCE [LARGE SCALE GENOMIC DNA]</scope>
</reference>
<reference key="3">
    <citation type="journal article" date="1995" name="Dev. Neurosci.">
        <title>FAC1, a novel gene identified with the monoclonal antibody Alz50, is developmentally regulated in human brain.</title>
        <authorList>
            <person name="Bowser R."/>
            <person name="Giambrone A."/>
            <person name="Davies P."/>
        </authorList>
    </citation>
    <scope>NUCLEOTIDE SEQUENCE [MRNA] OF 134-992 (ISOFORM 1)</scope>
    <scope>TISSUE SPECIFICITY</scope>
    <source>
        <tissue>Fetal brain</tissue>
    </source>
</reference>
<reference key="4">
    <citation type="journal article" date="2003" name="EMBO J.">
        <title>Isolation of human NURF: a regulator of Engrailed gene expression.</title>
        <authorList>
            <person name="Barak O."/>
            <person name="Lazzaro M.A."/>
            <person name="Lane W.S."/>
            <person name="Speicher D.W."/>
            <person name="Picketts D.J."/>
            <person name="Shiekhattar R."/>
        </authorList>
    </citation>
    <scope>NUCLEOTIDE SEQUENCE [MRNA] OF 140-3046 (ISOFORM 4)</scope>
    <scope>FUNCTION</scope>
    <scope>IDENTIFICATION IN THE NURF-1 ISWI CHROMATIN REMODELING COMPLEX</scope>
    <scope>INTERACTION WITH SMARCA1</scope>
    <scope>IDENTIFICATION BY MASS SPECTROMETRY</scope>
</reference>
<reference key="5">
    <citation type="journal article" date="2004" name="Genome Res.">
        <title>The status, quality, and expansion of the NIH full-length cDNA project: the Mammalian Gene Collection (MGC).</title>
        <authorList>
            <consortium name="The MGC Project Team"/>
        </authorList>
    </citation>
    <scope>NUCLEOTIDE SEQUENCE [LARGE SCALE MRNA] OF 2876-3046 (ISOFORM 1)</scope>
    <source>
        <tissue>Kidney</tissue>
    </source>
</reference>
<reference key="6">
    <citation type="journal article" date="1997" name="Exp. Neurol.">
        <title>FAC1 expression and localization in motor neurons of developing, adult, and amyotrophic lateral sclerosis spinal cord.</title>
        <authorList>
            <person name="Mu X."/>
            <person name="Springer J.E."/>
            <person name="Bowser R."/>
        </authorList>
    </citation>
    <scope>TISSUE SPECIFICITY</scope>
    <scope>SUBCELLULAR LOCATION</scope>
    <scope>DEVELOPMENTAL STAGE</scope>
</reference>
<reference key="7">
    <citation type="journal article" date="1999" name="Biochem. Biophys. Res. Commun.">
        <title>DNA binding activity of the fetal Alz-50 clone 1 (FAC1) protein is enhanced by phosphorylation.</title>
        <authorList>
            <person name="Jordan-Sciutto K.L."/>
            <person name="Dragich J.M."/>
            <person name="Bowser R."/>
        </authorList>
    </citation>
    <scope>DNA-BINDING</scope>
    <scope>PHOSPHORYLATION</scope>
</reference>
<reference key="8">
    <citation type="journal article" date="1999" name="J. Biol. Chem.">
        <title>Fetal Alz-50 clone 1, a novel zinc finger protein, binds a specific DNA sequence and acts as a transcriptional regulator.</title>
        <authorList>
            <person name="Jordan-Sciutto K.L."/>
            <person name="Dragich J.M."/>
            <person name="Rhodes J.L."/>
            <person name="Bowser R."/>
        </authorList>
    </citation>
    <scope>FUNCTION</scope>
</reference>
<reference key="9">
    <citation type="journal article" date="2000" name="Biochemistry">
        <title>Fetal Alz-50 clone 1 (FAC1) protein interacts with the Myc-associated zinc finger protein (ZF87/MAZ) and alters its transcriptional activity.</title>
        <authorList>
            <person name="Jordan-Sciutto K.L."/>
            <person name="Dragich J.M."/>
            <person name="Caltagarone J."/>
            <person name="Hall D.J."/>
            <person name="Bowser R."/>
        </authorList>
    </citation>
    <scope>INTERACTION WITH MAZ</scope>
    <scope>TISSUE SPECIFICITY</scope>
    <scope>SUBCELLULAR LOCATION</scope>
</reference>
<reference key="10">
    <citation type="journal article" date="2004" name="Biochemistry">
        <title>Fetal Alz-50 clone 1 interacts with the human orthologue of the Kelch-like Ech-associated protein.</title>
        <authorList>
            <person name="Strachan G.D."/>
            <person name="Morgan K.L."/>
            <person name="Otis L.L."/>
            <person name="Caltagarone J."/>
            <person name="Gittis A."/>
            <person name="Bowser R."/>
            <person name="Jordan-Sciutto K.L."/>
        </authorList>
    </citation>
    <scope>INTERACTION WITH KEAP1</scope>
    <scope>SUBCELLULAR LOCATION</scope>
</reference>
<reference key="11">
    <citation type="journal article" date="2004" name="J. Biol. Chem.">
        <title>A tissue-specific, naturally occurring human SNF2L variant inactivates chromatin remodeling.</title>
        <authorList>
            <person name="Barak O."/>
            <person name="Lazzaro M.A."/>
            <person name="Cooch N.S."/>
            <person name="Picketts D.J."/>
            <person name="Shiekhattar R."/>
        </authorList>
    </citation>
    <scope>IDENTIFICATION IN COMPLEXES WITH SMARCA1</scope>
    <scope>INTERACTION WITH SMARCA1</scope>
</reference>
<reference key="12">
    <citation type="journal article" date="2006" name="Cell">
        <title>Global, in vivo, and site-specific phosphorylation dynamics in signaling networks.</title>
        <authorList>
            <person name="Olsen J.V."/>
            <person name="Blagoev B."/>
            <person name="Gnad F."/>
            <person name="Macek B."/>
            <person name="Kumar C."/>
            <person name="Mortensen P."/>
            <person name="Mann M."/>
        </authorList>
    </citation>
    <scope>PHOSPHORYLATION [LARGE SCALE ANALYSIS] AT THR-1064</scope>
    <scope>IDENTIFICATION BY MASS SPECTROMETRY [LARGE SCALE ANALYSIS]</scope>
    <source>
        <tissue>Cervix carcinoma</tissue>
    </source>
</reference>
<reference key="13">
    <citation type="journal article" date="2006" name="Nature">
        <title>A PHD finger of NURF couples histone H3 lysine 4 trimethylation with chromatin remodelling.</title>
        <authorList>
            <person name="Wysocka J."/>
            <person name="Swigut T."/>
            <person name="Xiao H."/>
            <person name="Milne T.A."/>
            <person name="Kwon S.Y."/>
            <person name="Landry J."/>
            <person name="Kauer M."/>
            <person name="Tackett A.J."/>
            <person name="Chait B.T."/>
            <person name="Badenhorst P."/>
            <person name="Wu C."/>
            <person name="Allis C.D."/>
        </authorList>
    </citation>
    <scope>FUNCTION</scope>
    <scope>MUTAGENESIS OF TRP-2891</scope>
    <scope>IDENTIFICATION BY MASS SPECTROMETRY</scope>
</reference>
<reference key="14">
    <citation type="journal article" date="2007" name="Science">
        <title>ATM and ATR substrate analysis reveals extensive protein networks responsive to DNA damage.</title>
        <authorList>
            <person name="Matsuoka S."/>
            <person name="Ballif B.A."/>
            <person name="Smogorzewska A."/>
            <person name="McDonald E.R. III"/>
            <person name="Hurov K.E."/>
            <person name="Luo J."/>
            <person name="Bakalarski C.E."/>
            <person name="Zhao Z."/>
            <person name="Solimini N."/>
            <person name="Lerenthal Y."/>
            <person name="Shiloh Y."/>
            <person name="Gygi S.P."/>
            <person name="Elledge S.J."/>
        </authorList>
    </citation>
    <scope>PHOSPHORYLATION [LARGE SCALE ANALYSIS] AT SER-817</scope>
    <scope>IDENTIFICATION BY MASS SPECTROMETRY [LARGE SCALE ANALYSIS]</scope>
    <source>
        <tissue>Embryonic kidney</tissue>
    </source>
</reference>
<reference key="15">
    <citation type="journal article" date="2008" name="Proc. Natl. Acad. Sci. U.S.A.">
        <title>A quantitative atlas of mitotic phosphorylation.</title>
        <authorList>
            <person name="Dephoure N."/>
            <person name="Zhou C."/>
            <person name="Villen J."/>
            <person name="Beausoleil S.A."/>
            <person name="Bakalarski C.E."/>
            <person name="Elledge S.J."/>
            <person name="Gygi S.P."/>
        </authorList>
    </citation>
    <scope>PHOSPHORYLATION [LARGE SCALE ANALYSIS] AT SER-763; SER-1300 AND SER-2098</scope>
    <scope>IDENTIFICATION BY MASS SPECTROMETRY [LARGE SCALE ANALYSIS]</scope>
    <source>
        <tissue>Cervix carcinoma</tissue>
    </source>
</reference>
<reference key="16">
    <citation type="journal article" date="2009" name="Anal. Chem.">
        <title>Lys-N and trypsin cover complementary parts of the phosphoproteome in a refined SCX-based approach.</title>
        <authorList>
            <person name="Gauci S."/>
            <person name="Helbig A.O."/>
            <person name="Slijper M."/>
            <person name="Krijgsveld J."/>
            <person name="Heck A.J."/>
            <person name="Mohammed S."/>
        </authorList>
    </citation>
    <scope>IDENTIFICATION BY MASS SPECTROMETRY [LARGE SCALE ANALYSIS]</scope>
</reference>
<reference key="17">
    <citation type="journal article" date="2009" name="Sci. Signal.">
        <title>Quantitative phosphoproteomic analysis of T cell receptor signaling reveals system-wide modulation of protein-protein interactions.</title>
        <authorList>
            <person name="Mayya V."/>
            <person name="Lundgren D.H."/>
            <person name="Hwang S.-I."/>
            <person name="Rezaul K."/>
            <person name="Wu L."/>
            <person name="Eng J.K."/>
            <person name="Rodionov V."/>
            <person name="Han D.K."/>
        </authorList>
    </citation>
    <scope>PHOSPHORYLATION [LARGE SCALE ANALYSIS] AT SER-216</scope>
    <scope>IDENTIFICATION BY MASS SPECTROMETRY [LARGE SCALE ANALYSIS]</scope>
    <source>
        <tissue>Leukemic T-cell</tissue>
    </source>
</reference>
<reference key="18">
    <citation type="journal article" date="2009" name="Science">
        <title>Lysine acetylation targets protein complexes and co-regulates major cellular functions.</title>
        <authorList>
            <person name="Choudhary C."/>
            <person name="Kumar C."/>
            <person name="Gnad F."/>
            <person name="Nielsen M.L."/>
            <person name="Rehman M."/>
            <person name="Walther T.C."/>
            <person name="Olsen J.V."/>
            <person name="Mann M."/>
        </authorList>
    </citation>
    <scope>ACETYLATION [LARGE SCALE ANALYSIS] AT LYS-880</scope>
    <scope>IDENTIFICATION BY MASS SPECTROMETRY [LARGE SCALE ANALYSIS]</scope>
</reference>
<reference key="19">
    <citation type="journal article" date="2010" name="Sci. Signal.">
        <title>Quantitative phosphoproteomics reveals widespread full phosphorylation site occupancy during mitosis.</title>
        <authorList>
            <person name="Olsen J.V."/>
            <person name="Vermeulen M."/>
            <person name="Santamaria A."/>
            <person name="Kumar C."/>
            <person name="Miller M.L."/>
            <person name="Jensen L.J."/>
            <person name="Gnad F."/>
            <person name="Cox J."/>
            <person name="Jensen T.S."/>
            <person name="Nigg E.A."/>
            <person name="Brunak S."/>
            <person name="Mann M."/>
        </authorList>
    </citation>
    <scope>PHOSPHORYLATION [LARGE SCALE ANALYSIS] AT SER-216; SER-763; SER-1310 AND SER-2098</scope>
    <scope>IDENTIFICATION BY MASS SPECTROMETRY [LARGE SCALE ANALYSIS]</scope>
    <source>
        <tissue>Cervix carcinoma</tissue>
    </source>
</reference>
<reference key="20">
    <citation type="journal article" date="2011" name="BMC Syst. Biol.">
        <title>Initial characterization of the human central proteome.</title>
        <authorList>
            <person name="Burkard T.R."/>
            <person name="Planyavsky M."/>
            <person name="Kaupe I."/>
            <person name="Breitwieser F.P."/>
            <person name="Buerckstuemmer T."/>
            <person name="Bennett K.L."/>
            <person name="Superti-Furga G."/>
            <person name="Colinge J."/>
        </authorList>
    </citation>
    <scope>IDENTIFICATION BY MASS SPECTROMETRY [LARGE SCALE ANALYSIS]</scope>
</reference>
<reference key="21">
    <citation type="journal article" date="2011" name="Sci. Signal.">
        <title>System-wide temporal characterization of the proteome and phosphoproteome of human embryonic stem cell differentiation.</title>
        <authorList>
            <person name="Rigbolt K.T."/>
            <person name="Prokhorova T.A."/>
            <person name="Akimov V."/>
            <person name="Henningsen J."/>
            <person name="Johansen P.T."/>
            <person name="Kratchmarova I."/>
            <person name="Kassem M."/>
            <person name="Mann M."/>
            <person name="Olsen J.V."/>
            <person name="Blagoev B."/>
        </authorList>
    </citation>
    <scope>PHOSPHORYLATION [LARGE SCALE ANALYSIS] AT SER-216; SER-572; SER-763; THR-1064; SER-1231; SER-1300; SER-1310 AND SER-2465</scope>
    <scope>IDENTIFICATION BY MASS SPECTROMETRY [LARGE SCALE ANALYSIS]</scope>
</reference>
<reference key="22">
    <citation type="journal article" date="2013" name="J. Proteome Res.">
        <title>Toward a comprehensive characterization of a human cancer cell phosphoproteome.</title>
        <authorList>
            <person name="Zhou H."/>
            <person name="Di Palma S."/>
            <person name="Preisinger C."/>
            <person name="Peng M."/>
            <person name="Polat A.N."/>
            <person name="Heck A.J."/>
            <person name="Mohammed S."/>
        </authorList>
    </citation>
    <scope>PHOSPHORYLATION [LARGE SCALE ANALYSIS] AT SER-216; SER-572; SER-1300; THR-1303 AND SER-2098</scope>
    <scope>IDENTIFICATION BY MASS SPECTROMETRY [LARGE SCALE ANALYSIS]</scope>
    <source>
        <tissue>Cervix carcinoma</tissue>
        <tissue>Erythroleukemia</tissue>
    </source>
</reference>
<reference key="23">
    <citation type="journal article" date="2014" name="Mol. Cell. Proteomics">
        <title>Immunoaffinity enrichment and mass spectrometry analysis of protein methylation.</title>
        <authorList>
            <person name="Guo A."/>
            <person name="Gu H."/>
            <person name="Zhou J."/>
            <person name="Mulhern D."/>
            <person name="Wang Y."/>
            <person name="Lee K.A."/>
            <person name="Yang V."/>
            <person name="Aguiar M."/>
            <person name="Kornhauser J."/>
            <person name="Jia X."/>
            <person name="Ren J."/>
            <person name="Beausoleil S.A."/>
            <person name="Silva J.C."/>
            <person name="Vemulapalli V."/>
            <person name="Bedford M.T."/>
            <person name="Comb M.J."/>
        </authorList>
    </citation>
    <scope>METHYLATION [LARGE SCALE ANALYSIS] AT ARG-2155; ARG-2162; ARG-2184 AND ARG-2191</scope>
    <scope>IDENTIFICATION BY MASS SPECTROMETRY [LARGE SCALE ANALYSIS]</scope>
    <source>
        <tissue>Colon carcinoma</tissue>
    </source>
</reference>
<reference key="24">
    <citation type="journal article" date="2014" name="Nat. Struct. Mol. Biol.">
        <title>Uncovering global SUMOylation signaling networks in a site-specific manner.</title>
        <authorList>
            <person name="Hendriks I.A."/>
            <person name="D'Souza R.C."/>
            <person name="Yang B."/>
            <person name="Verlaan-de Vries M."/>
            <person name="Mann M."/>
            <person name="Vertegaal A.C."/>
        </authorList>
    </citation>
    <scope>SUMOYLATION [LARGE SCALE ANALYSIS] AT LYS-1088</scope>
    <scope>IDENTIFICATION BY MASS SPECTROMETRY [LARGE SCALE ANALYSIS]</scope>
</reference>
<reference key="25">
    <citation type="journal article" date="2015" name="Cell Rep.">
        <title>SUMO-2 orchestrates chromatin modifiers in response to DNA damage.</title>
        <authorList>
            <person name="Hendriks I.A."/>
            <person name="Treffers L.W."/>
            <person name="Verlaan-de Vries M."/>
            <person name="Olsen J.V."/>
            <person name="Vertegaal A.C."/>
        </authorList>
    </citation>
    <scope>SUMOYLATION [LARGE SCALE ANALYSIS] AT LYS-1088</scope>
    <scope>IDENTIFICATION BY MASS SPECTROMETRY [LARGE SCALE ANALYSIS]</scope>
</reference>
<reference key="26">
    <citation type="journal article" date="2015" name="Genes Dev.">
        <title>Screen identifies bromodomain protein ZMYND8 in chromatin recognition of transcription-associated DNA damage that promotes homologous recombination.</title>
        <authorList>
            <person name="Gong F."/>
            <person name="Chiu L.Y."/>
            <person name="Cox B."/>
            <person name="Aymard F."/>
            <person name="Clouaire T."/>
            <person name="Leung J.W."/>
            <person name="Cammarata M."/>
            <person name="Perez M."/>
            <person name="Agarwal P."/>
            <person name="Brodbelt J.S."/>
            <person name="Legube G."/>
            <person name="Miller K.M."/>
        </authorList>
    </citation>
    <scope>SUBCELLULAR LOCATION</scope>
</reference>
<reference key="27">
    <citation type="journal article" date="2015" name="Mol. Cell. Proteomics">
        <title>System-wide analysis of SUMOylation dynamics in response to replication stress reveals novel small ubiquitin-like modified target proteins and acceptor lysines relevant for genome stability.</title>
        <authorList>
            <person name="Xiao Z."/>
            <person name="Chang J.G."/>
            <person name="Hendriks I.A."/>
            <person name="Sigurdsson J.O."/>
            <person name="Olsen J.V."/>
            <person name="Vertegaal A.C."/>
        </authorList>
    </citation>
    <scope>SUMOYLATION [LARGE SCALE ANALYSIS] AT LYS-1088</scope>
    <scope>IDENTIFICATION BY MASS SPECTROMETRY [LARGE SCALE ANALYSIS]</scope>
</reference>
<reference key="28">
    <citation type="journal article" date="2017" name="Am. J. Hum. Genet.">
        <title>Haploinsufficiency of the Chromatin Remodeler BPTF Causes Syndromic Developmental and Speech Delay, Postnatal Microcephaly, and Dysmorphic Features.</title>
        <authorList>
            <consortium name="Deciphering Developmental Disorders Study"/>
            <person name="Stankiewicz P."/>
            <person name="Khan T.N."/>
            <person name="Szafranski P."/>
            <person name="Slattery L."/>
            <person name="Streff H."/>
            <person name="Vetrini F."/>
            <person name="Bernstein J.A."/>
            <person name="Brown C.W."/>
            <person name="Rosenfeld J.A."/>
            <person name="Rednam S."/>
            <person name="Scollon S."/>
            <person name="Bergstrom K.L."/>
            <person name="Parsons D.W."/>
            <person name="Plon S.E."/>
            <person name="Vieira M.W."/>
            <person name="Quaio C.R.D.C."/>
            <person name="Baratela W.A.R."/>
            <person name="Acosta Guio J.C."/>
            <person name="Armstrong R."/>
            <person name="Mehta S.G."/>
            <person name="Rump P."/>
            <person name="Pfundt R."/>
            <person name="Lewandowski R."/>
            <person name="Fernandes E.M."/>
            <person name="Shinde D.N."/>
            <person name="Tang S."/>
            <person name="Hoyer J."/>
            <person name="Zweier C."/>
            <person name="Reis A."/>
            <person name="Bacino C.A."/>
            <person name="Xiao R."/>
            <person name="Breman A.M."/>
            <person name="Smith J.L."/>
            <person name="Katsanis N."/>
            <person name="Bostwick B."/>
            <person name="Popp B."/>
            <person name="Davis E.E."/>
            <person name="Yang Y."/>
        </authorList>
    </citation>
    <scope>INVOLVEMENT IN NEDDFL</scope>
    <scope>VARIANTS NEDDFL THR-1924; ARG-2996 AND 3027-LYS--SER-3046 DEL</scope>
</reference>
<reference key="29">
    <citation type="journal article" date="2017" name="EMBO Rep.">
        <title>Expansion of the ISWI chromatin remodeler family with new active complexes.</title>
        <authorList>
            <person name="Oppikofer M."/>
            <person name="Bai T."/>
            <person name="Gan Y."/>
            <person name="Haley B."/>
            <person name="Liu P."/>
            <person name="Sandoval W."/>
            <person name="Ciferri C."/>
            <person name="Cochran A.G."/>
        </authorList>
    </citation>
    <scope>FUNCTION</scope>
    <scope>IDENTIFICATION IN THE NURF-1 ISWI CHROMATIN REMODELING COMPLEX</scope>
    <scope>IDENTIFICATION IN THE NURF-5 CHROMATIN REMODELING COMPLEX</scope>
    <scope>INTERACTION WITH SMARCA1 AND SMARCA5</scope>
</reference>
<reference key="30">
    <citation type="journal article" date="2017" name="Nat. Struct. Mol. Biol.">
        <title>Site-specific mapping of the human SUMO proteome reveals co-modification with phosphorylation.</title>
        <authorList>
            <person name="Hendriks I.A."/>
            <person name="Lyon D."/>
            <person name="Young C."/>
            <person name="Jensen L.J."/>
            <person name="Vertegaal A.C."/>
            <person name="Nielsen M.L."/>
        </authorList>
    </citation>
    <scope>SUMOYLATION [LARGE SCALE ANALYSIS] AT LYS-1088; LYS-1138; LYS-1209 AND LYS-1730</scope>
    <scope>IDENTIFICATION BY MASS SPECTROMETRY [LARGE SCALE ANALYSIS]</scope>
</reference>
<reference key="31">
    <citation type="journal article" date="2006" name="Nature">
        <title>Molecular basis for site-specific read-out of histone H3K4me3 by the BPTF PHD finger of NURF.</title>
        <authorList>
            <person name="Li H."/>
            <person name="Ilin S."/>
            <person name="Wang W."/>
            <person name="Duncan E.M."/>
            <person name="Wysocka J."/>
            <person name="Allis C.D."/>
            <person name="Patel D.J."/>
        </authorList>
    </citation>
    <scope>X-RAY CRYSTALLOGRAPHY (2.0 ANGSTROMS) OF 2865-3033</scope>
    <scope>X-RAY CRYSTALLOGRAPHY (2.0 ANGSTROMS) OF 2865-3033 IN COMPLEX WITH H3(1-154)K4ME3</scope>
    <scope>X-RAY CRYSTALLOGRAPHY (1.9 ANGSTROMS) OF 2865-3033 IN COMPLEX WITH H3(1-154)K4ME2</scope>
    <scope>STRUCTURE BY NMR OF 2865-2922</scope>
    <scope>STRUCTURE BY NMR OF 2865-2922 IN COMPLEX WITH H3(1-154)K4ME3</scope>
    <scope>FUNCTION</scope>
    <scope>MUTAGENESIS OF TYR-2869; TYR-2876; TYR-2882; GLY-2884; ASP-2886; GLN-2889 AND TRP-2891</scope>
</reference>
<reference key="32">
    <citation type="journal article" date="2007" name="Mol. Cell">
        <title>Structural basis for lower lysine methylation state-specific readout by MBT repeats of L3MBTL1 and an engineered PHD finger.</title>
        <authorList>
            <person name="Li H."/>
            <person name="Fischle W."/>
            <person name="Wang W."/>
            <person name="Duncan E.M."/>
            <person name="Liang L."/>
            <person name="Murakami-Ishibe S."/>
            <person name="Allis C.D."/>
            <person name="Patel D.J."/>
        </authorList>
    </citation>
    <scope>X-RAY CRYSTALLOGRAPHY (1.45 ANGSTROMS) OF 2865-3033 IN COMPLEX WITH H3(1-154)K4ME2</scope>
    <scope>FUNCTION</scope>
    <scope>DOMAIN PHD-FINGER</scope>
    <scope>MUTAGENESIS OF TYR-2876</scope>
</reference>
<reference key="33">
    <citation type="journal article" date="2012" name="Cell">
        <title>Histone recognition and large-scale structural analysis of the human bromodomain family.</title>
        <authorList>
            <person name="Filippakopoulos P."/>
            <person name="Picaud S."/>
            <person name="Mangos M."/>
            <person name="Keates T."/>
            <person name="Lambert J.P."/>
            <person name="Barsyte-Lovejoy D."/>
            <person name="Felletar I."/>
            <person name="Volkmer R."/>
            <person name="Muller S."/>
            <person name="Pawson T."/>
            <person name="Gingras A.C."/>
            <person name="Arrowsmith C.H."/>
            <person name="Knapp S."/>
        </authorList>
    </citation>
    <scope>X-RAY CRYSTALLOGRAPHY (1.58 ANGSTROMS) OF 2914-3037</scope>
</reference>
<accession>Q12830</accession>
<accession>Q6NX67</accession>
<accession>Q7Z7D6</accession>
<accession>Q9UIG2</accession>
<evidence type="ECO:0000255" key="1"/>
<evidence type="ECO:0000255" key="2">
    <source>
        <dbReference type="PROSITE-ProRule" id="PRU00035"/>
    </source>
</evidence>
<evidence type="ECO:0000255" key="3">
    <source>
        <dbReference type="PROSITE-ProRule" id="PRU00063"/>
    </source>
</evidence>
<evidence type="ECO:0000255" key="4">
    <source>
        <dbReference type="PROSITE-ProRule" id="PRU00146"/>
    </source>
</evidence>
<evidence type="ECO:0000256" key="5">
    <source>
        <dbReference type="SAM" id="MobiDB-lite"/>
    </source>
</evidence>
<evidence type="ECO:0000269" key="6">
    <source>
    </source>
</evidence>
<evidence type="ECO:0000269" key="7">
    <source>
    </source>
</evidence>
<evidence type="ECO:0000269" key="8">
    <source>
    </source>
</evidence>
<evidence type="ECO:0000269" key="9">
    <source>
    </source>
</evidence>
<evidence type="ECO:0000269" key="10">
    <source>
    </source>
</evidence>
<evidence type="ECO:0000269" key="11">
    <source>
    </source>
</evidence>
<evidence type="ECO:0000269" key="12">
    <source>
    </source>
</evidence>
<evidence type="ECO:0000269" key="13">
    <source>
    </source>
</evidence>
<evidence type="ECO:0000269" key="14">
    <source>
    </source>
</evidence>
<evidence type="ECO:0000269" key="15">
    <source>
    </source>
</evidence>
<evidence type="ECO:0000269" key="16">
    <source>
    </source>
</evidence>
<evidence type="ECO:0000269" key="17">
    <source>
    </source>
</evidence>
<evidence type="ECO:0000269" key="18">
    <source>
    </source>
</evidence>
<evidence type="ECO:0000269" key="19">
    <source>
    </source>
</evidence>
<evidence type="ECO:0000269" key="20">
    <source>
    </source>
</evidence>
<evidence type="ECO:0000303" key="21">
    <source>
    </source>
</evidence>
<evidence type="ECO:0000303" key="22">
    <source>
    </source>
</evidence>
<evidence type="ECO:0000305" key="23"/>
<evidence type="ECO:0007744" key="24">
    <source>
    </source>
</evidence>
<evidence type="ECO:0007744" key="25">
    <source>
    </source>
</evidence>
<evidence type="ECO:0007744" key="26">
    <source>
    </source>
</evidence>
<evidence type="ECO:0007744" key="27">
    <source>
    </source>
</evidence>
<evidence type="ECO:0007744" key="28">
    <source>
    </source>
</evidence>
<evidence type="ECO:0007744" key="29">
    <source>
    </source>
</evidence>
<evidence type="ECO:0007744" key="30">
    <source>
    </source>
</evidence>
<evidence type="ECO:0007744" key="31">
    <source>
    </source>
</evidence>
<evidence type="ECO:0007744" key="32">
    <source>
    </source>
</evidence>
<evidence type="ECO:0007744" key="33">
    <source>
    </source>
</evidence>
<evidence type="ECO:0007744" key="34">
    <source>
    </source>
</evidence>
<evidence type="ECO:0007744" key="35">
    <source>
    </source>
</evidence>
<evidence type="ECO:0007744" key="36">
    <source>
    </source>
</evidence>
<evidence type="ECO:0007829" key="37">
    <source>
        <dbReference type="PDB" id="2FUI"/>
    </source>
</evidence>
<evidence type="ECO:0007829" key="38">
    <source>
        <dbReference type="PDB" id="2RI7"/>
    </source>
</evidence>
<evidence type="ECO:0007829" key="39">
    <source>
        <dbReference type="PDB" id="5R4O"/>
    </source>
</evidence>
<evidence type="ECO:0007829" key="40">
    <source>
        <dbReference type="PDB" id="8AG2"/>
    </source>
</evidence>
<protein>
    <recommendedName>
        <fullName>Nucleosome-remodeling factor subunit BPTF</fullName>
    </recommendedName>
    <alternativeName>
        <fullName>Bromodomain and PHD finger-containing transcription factor</fullName>
    </alternativeName>
    <alternativeName>
        <fullName>Fetal Alz-50 clone 1 protein</fullName>
    </alternativeName>
    <alternativeName>
        <fullName>Fetal Alzheimer antigen</fullName>
    </alternativeName>
</protein>
<gene>
    <name type="primary">BPTF</name>
    <name type="synonym">FAC1</name>
    <name type="synonym">FALZ</name>
</gene>
<keyword id="KW-0002">3D-structure</keyword>
<keyword id="KW-0007">Acetylation</keyword>
<keyword id="KW-0025">Alternative splicing</keyword>
<keyword id="KW-0103">Bromodomain</keyword>
<keyword id="KW-0156">Chromatin regulator</keyword>
<keyword id="KW-0175">Coiled coil</keyword>
<keyword id="KW-0963">Cytoplasm</keyword>
<keyword id="KW-0225">Disease variant</keyword>
<keyword id="KW-0991">Intellectual disability</keyword>
<keyword id="KW-1017">Isopeptide bond</keyword>
<keyword id="KW-0479">Metal-binding</keyword>
<keyword id="KW-0488">Methylation</keyword>
<keyword id="KW-0539">Nucleus</keyword>
<keyword id="KW-0597">Phosphoprotein</keyword>
<keyword id="KW-1267">Proteomics identification</keyword>
<keyword id="KW-1185">Reference proteome</keyword>
<keyword id="KW-0677">Repeat</keyword>
<keyword id="KW-0804">Transcription</keyword>
<keyword id="KW-0805">Transcription regulation</keyword>
<keyword id="KW-0832">Ubl conjugation</keyword>
<keyword id="KW-0862">Zinc</keyword>
<keyword id="KW-0863">Zinc-finger</keyword>
<feature type="chain" id="PRO_0000087176" description="Nucleosome-remodeling factor subunit BPTF">
    <location>
        <begin position="1"/>
        <end position="3046"/>
    </location>
</feature>
<feature type="domain" description="DDT" evidence="3">
    <location>
        <begin position="240"/>
        <end position="300"/>
    </location>
</feature>
<feature type="domain" description="Bromo" evidence="2">
    <location>
        <begin position="2927"/>
        <end position="3031"/>
    </location>
</feature>
<feature type="zinc finger region" description="PHD-type 1" evidence="4">
    <location>
        <begin position="390"/>
        <end position="437"/>
    </location>
</feature>
<feature type="zinc finger region" description="PHD-type 2" evidence="4">
    <location>
        <begin position="2867"/>
        <end position="2918"/>
    </location>
</feature>
<feature type="region of interest" description="Disordered" evidence="5">
    <location>
        <begin position="1"/>
        <end position="232"/>
    </location>
</feature>
<feature type="region of interest" description="Disordered" evidence="5">
    <location>
        <begin position="567"/>
        <end position="774"/>
    </location>
</feature>
<feature type="region of interest" description="Interaction with KEAP1" evidence="12">
    <location>
        <begin position="640"/>
        <end position="749"/>
    </location>
</feature>
<feature type="region of interest" description="Interaction with MAZ" evidence="9">
    <location>
        <begin position="839"/>
        <end position="921"/>
    </location>
</feature>
<feature type="region of interest" description="Disordered" evidence="5">
    <location>
        <begin position="1057"/>
        <end position="1157"/>
    </location>
</feature>
<feature type="region of interest" description="Disordered" evidence="5">
    <location>
        <begin position="1215"/>
        <end position="1339"/>
    </location>
</feature>
<feature type="region of interest" description="Disordered" evidence="5">
    <location>
        <begin position="1371"/>
        <end position="1448"/>
    </location>
</feature>
<feature type="region of interest" description="Disordered" evidence="5">
    <location>
        <begin position="1465"/>
        <end position="1537"/>
    </location>
</feature>
<feature type="region of interest" description="Disordered" evidence="5">
    <location>
        <begin position="1605"/>
        <end position="1706"/>
    </location>
</feature>
<feature type="region of interest" description="Disordered" evidence="5">
    <location>
        <begin position="1973"/>
        <end position="2003"/>
    </location>
</feature>
<feature type="region of interest" description="Disordered" evidence="5">
    <location>
        <begin position="2041"/>
        <end position="2070"/>
    </location>
</feature>
<feature type="region of interest" description="Disordered" evidence="5">
    <location>
        <begin position="2160"/>
        <end position="2180"/>
    </location>
</feature>
<feature type="region of interest" description="Disordered" evidence="5">
    <location>
        <begin position="2232"/>
        <end position="2270"/>
    </location>
</feature>
<feature type="region of interest" description="Disordered" evidence="5">
    <location>
        <begin position="2346"/>
        <end position="2549"/>
    </location>
</feature>
<feature type="region of interest" description="Disordered" evidence="5">
    <location>
        <begin position="2714"/>
        <end position="2733"/>
    </location>
</feature>
<feature type="region of interest" description="Disordered" evidence="5">
    <location>
        <begin position="2795"/>
        <end position="2858"/>
    </location>
</feature>
<feature type="coiled-coil region" evidence="1">
    <location>
        <begin position="574"/>
        <end position="604"/>
    </location>
</feature>
<feature type="coiled-coil region" evidence="1">
    <location>
        <begin position="978"/>
        <end position="1007"/>
    </location>
</feature>
<feature type="coiled-coil region" evidence="1">
    <location>
        <begin position="2022"/>
        <end position="2050"/>
    </location>
</feature>
<feature type="coiled-coil region" evidence="1">
    <location>
        <begin position="2706"/>
        <end position="2732"/>
    </location>
</feature>
<feature type="compositionally biased region" description="Pro residues" evidence="5">
    <location>
        <begin position="22"/>
        <end position="33"/>
    </location>
</feature>
<feature type="compositionally biased region" description="Low complexity" evidence="5">
    <location>
        <begin position="62"/>
        <end position="72"/>
    </location>
</feature>
<feature type="compositionally biased region" description="Pro residues" evidence="5">
    <location>
        <begin position="78"/>
        <end position="87"/>
    </location>
</feature>
<feature type="compositionally biased region" description="Gly residues" evidence="5">
    <location>
        <begin position="91"/>
        <end position="110"/>
    </location>
</feature>
<feature type="compositionally biased region" description="Acidic residues" evidence="5">
    <location>
        <begin position="129"/>
        <end position="186"/>
    </location>
</feature>
<feature type="compositionally biased region" description="Low complexity" evidence="5">
    <location>
        <begin position="190"/>
        <end position="203"/>
    </location>
</feature>
<feature type="compositionally biased region" description="Basic residues" evidence="5">
    <location>
        <begin position="205"/>
        <end position="215"/>
    </location>
</feature>
<feature type="compositionally biased region" description="Basic and acidic residues" evidence="5">
    <location>
        <begin position="567"/>
        <end position="609"/>
    </location>
</feature>
<feature type="compositionally biased region" description="Basic and acidic residues" evidence="5">
    <location>
        <begin position="616"/>
        <end position="628"/>
    </location>
</feature>
<feature type="compositionally biased region" description="Polar residues" evidence="5">
    <location>
        <begin position="631"/>
        <end position="653"/>
    </location>
</feature>
<feature type="compositionally biased region" description="Polar residues" evidence="5">
    <location>
        <begin position="690"/>
        <end position="705"/>
    </location>
</feature>
<feature type="compositionally biased region" description="Low complexity" evidence="5">
    <location>
        <begin position="706"/>
        <end position="723"/>
    </location>
</feature>
<feature type="compositionally biased region" description="Basic and acidic residues" evidence="5">
    <location>
        <begin position="725"/>
        <end position="738"/>
    </location>
</feature>
<feature type="compositionally biased region" description="Basic and acidic residues" evidence="5">
    <location>
        <begin position="1087"/>
        <end position="1102"/>
    </location>
</feature>
<feature type="compositionally biased region" description="Basic and acidic residues" evidence="5">
    <location>
        <begin position="1113"/>
        <end position="1152"/>
    </location>
</feature>
<feature type="compositionally biased region" description="Polar residues" evidence="5">
    <location>
        <begin position="1220"/>
        <end position="1232"/>
    </location>
</feature>
<feature type="compositionally biased region" description="Polar residues" evidence="5">
    <location>
        <begin position="1242"/>
        <end position="1257"/>
    </location>
</feature>
<feature type="compositionally biased region" description="Polar residues" evidence="5">
    <location>
        <begin position="1266"/>
        <end position="1285"/>
    </location>
</feature>
<feature type="compositionally biased region" description="Basic and acidic residues" evidence="5">
    <location>
        <begin position="1287"/>
        <end position="1305"/>
    </location>
</feature>
<feature type="compositionally biased region" description="Low complexity" evidence="5">
    <location>
        <begin position="1372"/>
        <end position="1386"/>
    </location>
</feature>
<feature type="compositionally biased region" description="Polar residues" evidence="5">
    <location>
        <begin position="1409"/>
        <end position="1426"/>
    </location>
</feature>
<feature type="compositionally biased region" description="Polar residues" evidence="5">
    <location>
        <begin position="1434"/>
        <end position="1444"/>
    </location>
</feature>
<feature type="compositionally biased region" description="Basic and acidic residues" evidence="5">
    <location>
        <begin position="1491"/>
        <end position="1525"/>
    </location>
</feature>
<feature type="compositionally biased region" description="Polar residues" evidence="5">
    <location>
        <begin position="1629"/>
        <end position="1656"/>
    </location>
</feature>
<feature type="compositionally biased region" description="Low complexity" evidence="5">
    <location>
        <begin position="2054"/>
        <end position="2070"/>
    </location>
</feature>
<feature type="compositionally biased region" description="Polar residues" evidence="5">
    <location>
        <begin position="2232"/>
        <end position="2256"/>
    </location>
</feature>
<feature type="compositionally biased region" description="Low complexity" evidence="5">
    <location>
        <begin position="2257"/>
        <end position="2270"/>
    </location>
</feature>
<feature type="compositionally biased region" description="Low complexity" evidence="5">
    <location>
        <begin position="2346"/>
        <end position="2362"/>
    </location>
</feature>
<feature type="compositionally biased region" description="Polar residues" evidence="5">
    <location>
        <begin position="2363"/>
        <end position="2375"/>
    </location>
</feature>
<feature type="compositionally biased region" description="Low complexity" evidence="5">
    <location>
        <begin position="2391"/>
        <end position="2431"/>
    </location>
</feature>
<feature type="compositionally biased region" description="Polar residues" evidence="5">
    <location>
        <begin position="2432"/>
        <end position="2485"/>
    </location>
</feature>
<feature type="compositionally biased region" description="Low complexity" evidence="5">
    <location>
        <begin position="2486"/>
        <end position="2538"/>
    </location>
</feature>
<feature type="compositionally biased region" description="Basic and acidic residues" evidence="5">
    <location>
        <begin position="2714"/>
        <end position="2729"/>
    </location>
</feature>
<feature type="compositionally biased region" description="Pro residues" evidence="5">
    <location>
        <begin position="2795"/>
        <end position="2818"/>
    </location>
</feature>
<feature type="compositionally biased region" description="Basic and acidic residues" evidence="5">
    <location>
        <begin position="2838"/>
        <end position="2847"/>
    </location>
</feature>
<feature type="site" description="Histone H3K4me3 binding">
    <location>
        <position position="2869"/>
    </location>
</feature>
<feature type="site" description="Histone H3K4me3 binding">
    <location>
        <position position="2876"/>
    </location>
</feature>
<feature type="site" description="Histone H3K4me3 binding">
    <location>
        <position position="2882"/>
    </location>
</feature>
<feature type="site" description="Histone H3K4me3 binding">
    <location>
        <position position="2891"/>
    </location>
</feature>
<feature type="modified residue" description="Phosphoserine" evidence="28 29 30 31">
    <location>
        <position position="216"/>
    </location>
</feature>
<feature type="modified residue" description="Phosphoserine" evidence="30 31">
    <location>
        <position position="572"/>
    </location>
</feature>
<feature type="modified residue" description="Phosphoserine" evidence="26 29 30">
    <location>
        <position position="763"/>
    </location>
</feature>
<feature type="modified residue" description="Phosphoserine" evidence="25">
    <location>
        <position position="817"/>
    </location>
</feature>
<feature type="modified residue" description="N6-acetyllysine" evidence="27">
    <location>
        <position position="880"/>
    </location>
</feature>
<feature type="modified residue" description="Phosphothreonine" evidence="24 30">
    <location>
        <position position="1064"/>
    </location>
</feature>
<feature type="modified residue" description="Phosphoserine" evidence="30">
    <location>
        <position position="1231"/>
    </location>
</feature>
<feature type="modified residue" description="Phosphoserine" evidence="26 30 31">
    <location>
        <position position="1300"/>
    </location>
</feature>
<feature type="modified residue" description="Phosphothreonine" evidence="31">
    <location>
        <position position="1303"/>
    </location>
</feature>
<feature type="modified residue" description="Phosphoserine" evidence="29 30">
    <location>
        <position position="1310"/>
    </location>
</feature>
<feature type="modified residue" description="Phosphoserine" evidence="26 29 31">
    <location>
        <position position="2098"/>
    </location>
</feature>
<feature type="modified residue" description="Omega-N-methylarginine" evidence="32">
    <location>
        <position position="2155"/>
    </location>
</feature>
<feature type="modified residue" description="Asymmetric dimethylarginine" evidence="32">
    <location>
        <position position="2162"/>
    </location>
</feature>
<feature type="modified residue" description="Asymmetric dimethylarginine" evidence="32">
    <location>
        <position position="2184"/>
    </location>
</feature>
<feature type="modified residue" description="Asymmetric dimethylarginine" evidence="32">
    <location>
        <position position="2191"/>
    </location>
</feature>
<feature type="modified residue" description="Phosphoserine" evidence="30">
    <location>
        <position position="2465"/>
    </location>
</feature>
<feature type="cross-link" description="Glycyl lysine isopeptide (Lys-Gly) (interchain with G-Cter in SUMO2)" evidence="33 34 35 36">
    <location>
        <position position="1088"/>
    </location>
</feature>
<feature type="cross-link" description="Glycyl lysine isopeptide (Lys-Gly) (interchain with G-Cter in SUMO2)" evidence="36">
    <location>
        <position position="1138"/>
    </location>
</feature>
<feature type="cross-link" description="Glycyl lysine isopeptide (Lys-Gly) (interchain with G-Cter in SUMO2)" evidence="36">
    <location>
        <position position="1209"/>
    </location>
</feature>
<feature type="cross-link" description="Glycyl lysine isopeptide (Lys-Gly) (interchain with G-Cter in SUMO2)" evidence="36">
    <location>
        <position position="1730"/>
    </location>
</feature>
<feature type="splice variant" id="VSP_020402" description="In isoform 2." evidence="21">
    <location>
        <begin position="622"/>
        <end position="747"/>
    </location>
</feature>
<feature type="splice variant" id="VSP_020405" description="In isoform 4." evidence="22">
    <location>
        <begin position="2522"/>
        <end position="2664"/>
    </location>
</feature>
<feature type="sequence variant" id="VAR_080531" description="In NEDDFL; dbSNP:rs1425998598." evidence="18">
    <original>A</original>
    <variation>T</variation>
    <location>
        <position position="1924"/>
    </location>
</feature>
<feature type="sequence variant" id="VAR_080532" description="In NEDDFL; dbSNP:rs782736894." evidence="18">
    <original>M</original>
    <variation>R</variation>
    <location>
        <position position="2996"/>
    </location>
</feature>
<feature type="sequence variant" id="VAR_080533" description="In NEDDFL." evidence="18">
    <location>
        <begin position="3027"/>
        <end position="3046"/>
    </location>
</feature>
<feature type="mutagenesis site" description="Abolishes binding to histone H3K4me3." evidence="14">
    <original>Y</original>
    <variation>T</variation>
    <location>
        <position position="2869"/>
    </location>
</feature>
<feature type="mutagenesis site" description="Induces binding to histone H3K4me2." evidence="14 15">
    <original>Y</original>
    <variation>E</variation>
    <location>
        <position position="2876"/>
    </location>
</feature>
<feature type="mutagenesis site" description="Strongly reduces binding to histone H3K4me3." evidence="14 15">
    <original>Y</original>
    <variation>T</variation>
    <location>
        <position position="2876"/>
    </location>
</feature>
<feature type="mutagenesis site" description="Abolishes binding to histone H3K4me3." evidence="14">
    <original>Y</original>
    <variation>S</variation>
    <location>
        <position position="2882"/>
    </location>
</feature>
<feature type="mutagenesis site" description="Strongly reduces binding to histone H3K4me3." evidence="14">
    <original>G</original>
    <variation>E</variation>
    <variation>L</variation>
    <location>
        <position position="2884"/>
    </location>
</feature>
<feature type="mutagenesis site" description="Abolishes binding to histone H3K4me3." evidence="14">
    <original>D</original>
    <variation>N</variation>
    <variation>A</variation>
    <location>
        <position position="2886"/>
    </location>
</feature>
<feature type="mutagenesis site" description="Strongly reduces binding to histone H3K4me3." evidence="14">
    <original>Q</original>
    <variation>K</variation>
    <location>
        <position position="2889"/>
    </location>
</feature>
<feature type="mutagenesis site" description="Abolishes binding to histone H3K4me3." evidence="13 14">
    <original>W</original>
    <variation>E</variation>
    <variation>F</variation>
    <location>
        <position position="2891"/>
    </location>
</feature>
<feature type="sequence conflict" description="In Ref. 3; AAA97522." evidence="23" ref="3">
    <original>K</original>
    <variation>T</variation>
    <location>
        <position position="752"/>
    </location>
</feature>
<feature type="sequence conflict" description="In Ref. 3; AAA97522." evidence="23" ref="3">
    <original>N</original>
    <variation>T</variation>
    <location>
        <position position="757"/>
    </location>
</feature>
<feature type="sequence conflict" description="In Ref. 1; BAA89208." evidence="23" ref="1">
    <original>S</original>
    <variation>F</variation>
    <location>
        <position position="969"/>
    </location>
</feature>
<feature type="sequence conflict" description="In Ref. 1; BAA89208." evidence="23" ref="1">
    <original>E</original>
    <variation>Q</variation>
    <location>
        <position position="1268"/>
    </location>
</feature>
<feature type="sequence conflict" description="In Ref. 1; BAA89208." evidence="23" ref="1">
    <original>S</original>
    <variation>T</variation>
    <location>
        <position position="1330"/>
    </location>
</feature>
<feature type="sequence conflict" description="In Ref. 1; BAA89208 and 4; AAP22284." evidence="23" ref="1 4">
    <original>S</original>
    <variation>T</variation>
    <location>
        <position position="1842"/>
    </location>
</feature>
<feature type="sequence conflict" description="In Ref. 1; BAA89208 and 4; AAP22284." evidence="23" ref="1 4">
    <original>A</original>
    <variation>V</variation>
    <location>
        <position position="1926"/>
    </location>
</feature>
<feature type="sequence conflict" description="In Ref. 1; BAA89208 and 4; AAP22284." evidence="23" ref="1 4">
    <original>T</original>
    <variation>S</variation>
    <location>
        <position position="1932"/>
    </location>
</feature>
<feature type="sequence conflict" description="In Ref. 1; BAA89208." evidence="23" ref="1">
    <original>S</original>
    <variation>F</variation>
    <location>
        <position position="1960"/>
    </location>
</feature>
<feature type="sequence conflict" description="In Ref. 1; BAA89208." evidence="23" ref="1">
    <original>E</original>
    <variation>K</variation>
    <location>
        <position position="2393"/>
    </location>
</feature>
<feature type="sequence conflict" description="In Ref. 1; BAA89208." evidence="23" ref="1">
    <original>Q</original>
    <variation>R</variation>
    <location>
        <position position="2404"/>
    </location>
</feature>
<feature type="sequence conflict" description="In Ref. 1; BAA89208." evidence="23" ref="1">
    <original>T</original>
    <variation>S</variation>
    <location>
        <position position="2540"/>
    </location>
</feature>
<feature type="sequence conflict" description="In Ref. 1; BAA89208." evidence="23" ref="1">
    <original>AP</original>
    <variation>VL</variation>
    <location>
        <begin position="2802"/>
        <end position="2803"/>
    </location>
</feature>
<feature type="sequence conflict" description="In Ref. 1; BAA89208." evidence="23" ref="1">
    <original>A</original>
    <variation>G</variation>
    <location>
        <position position="2818"/>
    </location>
</feature>
<feature type="sequence conflict" description="In Ref. 1; BAA89208." evidence="23" ref="1">
    <original>A</original>
    <variation>V</variation>
    <location>
        <position position="2832"/>
    </location>
</feature>
<feature type="sequence conflict" description="In Ref. 5; AAH67234." evidence="23" ref="5">
    <original>Y</original>
    <variation>G</variation>
    <location>
        <position position="2876"/>
    </location>
</feature>
<feature type="sequence conflict" description="In Ref. 5; AAH67234." evidence="23" ref="5">
    <original>K</original>
    <variation>Q</variation>
    <location>
        <position position="2880"/>
    </location>
</feature>
<feature type="turn" evidence="38">
    <location>
        <begin position="2870"/>
        <end position="2873"/>
    </location>
</feature>
<feature type="strand" evidence="38">
    <location>
        <begin position="2882"/>
        <end position="2884"/>
    </location>
</feature>
<feature type="turn" evidence="38">
    <location>
        <begin position="2886"/>
        <end position="2888"/>
    </location>
</feature>
<feature type="strand" evidence="38">
    <location>
        <begin position="2891"/>
        <end position="2893"/>
    </location>
</feature>
<feature type="helix" evidence="38">
    <location>
        <begin position="2894"/>
        <end position="2897"/>
    </location>
</feature>
<feature type="helix" evidence="38">
    <location>
        <begin position="2901"/>
        <end position="2904"/>
    </location>
</feature>
<feature type="helix" evidence="37">
    <location>
        <begin position="2913"/>
        <end position="2919"/>
    </location>
</feature>
<feature type="helix" evidence="39">
    <location>
        <begin position="2921"/>
        <end position="2925"/>
    </location>
</feature>
<feature type="helix" evidence="40">
    <location>
        <begin position="2930"/>
        <end position="2945"/>
    </location>
</feature>
<feature type="helix" evidence="40">
    <location>
        <begin position="2947"/>
        <end position="2952"/>
    </location>
</feature>
<feature type="helix" evidence="40">
    <location>
        <begin position="2958"/>
        <end position="2960"/>
    </location>
</feature>
<feature type="helix" evidence="40">
    <location>
        <begin position="2964"/>
        <end position="2967"/>
    </location>
</feature>
<feature type="helix" evidence="40">
    <location>
        <begin position="2974"/>
        <end position="2982"/>
    </location>
</feature>
<feature type="helix" evidence="40">
    <location>
        <begin position="2989"/>
        <end position="3006"/>
    </location>
</feature>
<feature type="helix" evidence="40">
    <location>
        <begin position="3012"/>
        <end position="3034"/>
    </location>
</feature>
<dbReference type="EMBL" id="AB032251">
    <property type="protein sequence ID" value="BAA89208.1"/>
    <property type="status" value="ALT_SEQ"/>
    <property type="molecule type" value="mRNA"/>
</dbReference>
<dbReference type="EMBL" id="AC006534">
    <property type="status" value="NOT_ANNOTATED_CDS"/>
    <property type="molecule type" value="Genomic_DNA"/>
</dbReference>
<dbReference type="EMBL" id="AC107377">
    <property type="status" value="NOT_ANNOTATED_CDS"/>
    <property type="molecule type" value="Genomic_DNA"/>
</dbReference>
<dbReference type="EMBL" id="AC134407">
    <property type="status" value="NOT_ANNOTATED_CDS"/>
    <property type="molecule type" value="Genomic_DNA"/>
</dbReference>
<dbReference type="EMBL" id="U05237">
    <property type="protein sequence ID" value="AAA97522.1"/>
    <property type="status" value="ALT_SEQ"/>
    <property type="molecule type" value="mRNA"/>
</dbReference>
<dbReference type="EMBL" id="AY282495">
    <property type="protein sequence ID" value="AAP22284.1"/>
    <property type="molecule type" value="mRNA"/>
</dbReference>
<dbReference type="EMBL" id="BC067234">
    <property type="protein sequence ID" value="AAH67234.1"/>
    <property type="molecule type" value="mRNA"/>
</dbReference>
<dbReference type="CCDS" id="CCDS11673.1">
    <molecule id="Q12830-2"/>
</dbReference>
<dbReference type="PIR" id="G01252">
    <property type="entry name" value="G01252"/>
</dbReference>
<dbReference type="RefSeq" id="NP_004450.3">
    <molecule id="Q12830-4"/>
    <property type="nucleotide sequence ID" value="NM_004459.6"/>
</dbReference>
<dbReference type="RefSeq" id="NP_872579.2">
    <molecule id="Q12830-2"/>
    <property type="nucleotide sequence ID" value="NM_182641.3"/>
</dbReference>
<dbReference type="RefSeq" id="XP_047291553.1">
    <molecule id="Q12830-1"/>
    <property type="nucleotide sequence ID" value="XM_047435597.1"/>
</dbReference>
<dbReference type="RefSeq" id="XP_054171416.1">
    <molecule id="Q12830-1"/>
    <property type="nucleotide sequence ID" value="XM_054315441.1"/>
</dbReference>
<dbReference type="PDB" id="2F6J">
    <property type="method" value="X-ray"/>
    <property type="resolution" value="2.00 A"/>
    <property type="chains" value="A/B/C=2865-3033"/>
</dbReference>
<dbReference type="PDB" id="2F6N">
    <property type="method" value="X-ray"/>
    <property type="resolution" value="2.00 A"/>
    <property type="chains" value="A/B=2865-3033"/>
</dbReference>
<dbReference type="PDB" id="2FSA">
    <property type="method" value="X-ray"/>
    <property type="resolution" value="1.90 A"/>
    <property type="chains" value="A/B/C=2865-3033"/>
</dbReference>
<dbReference type="PDB" id="2FUI">
    <property type="method" value="NMR"/>
    <property type="chains" value="A=2865-2921"/>
</dbReference>
<dbReference type="PDB" id="2FUU">
    <property type="method" value="NMR"/>
    <property type="chains" value="A=2865-2921"/>
</dbReference>
<dbReference type="PDB" id="2RI7">
    <property type="method" value="X-ray"/>
    <property type="resolution" value="1.45 A"/>
    <property type="chains" value="A=2865-3033"/>
</dbReference>
<dbReference type="PDB" id="3QZS">
    <property type="method" value="X-ray"/>
    <property type="resolution" value="1.80 A"/>
    <property type="chains" value="A/B=2924-3033"/>
</dbReference>
<dbReference type="PDB" id="3QZT">
    <property type="method" value="X-ray"/>
    <property type="resolution" value="1.50 A"/>
    <property type="chains" value="A=2924-3033"/>
</dbReference>
<dbReference type="PDB" id="3QZV">
    <property type="method" value="X-ray"/>
    <property type="resolution" value="2.00 A"/>
    <property type="chains" value="A=2865-3033"/>
</dbReference>
<dbReference type="PDB" id="3UV2">
    <property type="method" value="X-ray"/>
    <property type="resolution" value="1.58 A"/>
    <property type="chains" value="A=2914-3037"/>
</dbReference>
<dbReference type="PDB" id="5H6Y">
    <property type="method" value="X-ray"/>
    <property type="resolution" value="2.00 A"/>
    <property type="chains" value="A=2921-3036"/>
</dbReference>
<dbReference type="PDB" id="5R4G">
    <property type="method" value="X-ray"/>
    <property type="resolution" value="1.25 A"/>
    <property type="chains" value="A=2917-3037"/>
</dbReference>
<dbReference type="PDB" id="5R4H">
    <property type="method" value="X-ray"/>
    <property type="resolution" value="1.18 A"/>
    <property type="chains" value="A=2917-3037"/>
</dbReference>
<dbReference type="PDB" id="5R4I">
    <property type="method" value="X-ray"/>
    <property type="resolution" value="1.28 A"/>
    <property type="chains" value="A=2917-3037"/>
</dbReference>
<dbReference type="PDB" id="5R4J">
    <property type="method" value="X-ray"/>
    <property type="resolution" value="1.39 A"/>
    <property type="chains" value="A=2917-3037"/>
</dbReference>
<dbReference type="PDB" id="5R4K">
    <property type="method" value="X-ray"/>
    <property type="resolution" value="1.17 A"/>
    <property type="chains" value="A=2917-3037"/>
</dbReference>
<dbReference type="PDB" id="5R4L">
    <property type="method" value="X-ray"/>
    <property type="resolution" value="1.13 A"/>
    <property type="chains" value="A=2917-3037"/>
</dbReference>
<dbReference type="PDB" id="5R4M">
    <property type="method" value="X-ray"/>
    <property type="resolution" value="1.11 A"/>
    <property type="chains" value="A=2917-3037"/>
</dbReference>
<dbReference type="PDB" id="5R4N">
    <property type="method" value="X-ray"/>
    <property type="resolution" value="1.28 A"/>
    <property type="chains" value="A=2917-3037"/>
</dbReference>
<dbReference type="PDB" id="5R4O">
    <property type="method" value="X-ray"/>
    <property type="resolution" value="1.05 A"/>
    <property type="chains" value="A=2917-3037"/>
</dbReference>
<dbReference type="PDB" id="6AZE">
    <property type="method" value="X-ray"/>
    <property type="resolution" value="2.45 A"/>
    <property type="chains" value="A=2866-3032"/>
</dbReference>
<dbReference type="PDB" id="6LU5">
    <property type="method" value="X-ray"/>
    <property type="resolution" value="1.87 A"/>
    <property type="chains" value="A=2925-3032"/>
</dbReference>
<dbReference type="PDB" id="6LU6">
    <property type="method" value="X-ray"/>
    <property type="resolution" value="1.97 A"/>
    <property type="chains" value="A=2924-3033"/>
</dbReference>
<dbReference type="PDB" id="7DMY">
    <property type="method" value="X-ray"/>
    <property type="resolution" value="2.00 A"/>
    <property type="chains" value="A=2917-3037"/>
</dbReference>
<dbReference type="PDB" id="7DN4">
    <property type="method" value="X-ray"/>
    <property type="resolution" value="2.84 A"/>
    <property type="chains" value="A/B/C/D/E/F=2917-3037"/>
</dbReference>
<dbReference type="PDB" id="7F5D">
    <property type="method" value="X-ray"/>
    <property type="resolution" value="1.57 A"/>
    <property type="chains" value="A=2924-3033"/>
</dbReference>
<dbReference type="PDB" id="7F5E">
    <property type="method" value="X-ray"/>
    <property type="resolution" value="2.20 A"/>
    <property type="chains" value="A=2924-3033"/>
</dbReference>
<dbReference type="PDB" id="7JT4">
    <property type="method" value="X-ray"/>
    <property type="resolution" value="2.06 A"/>
    <property type="chains" value="A=2917-3037"/>
</dbReference>
<dbReference type="PDB" id="7K6R">
    <property type="method" value="X-ray"/>
    <property type="resolution" value="1.60 A"/>
    <property type="chains" value="A=2917-3037"/>
</dbReference>
<dbReference type="PDB" id="7K6S">
    <property type="method" value="X-ray"/>
    <property type="resolution" value="1.23 A"/>
    <property type="chains" value="A=2917-3037"/>
</dbReference>
<dbReference type="PDB" id="7KDW">
    <property type="method" value="X-ray"/>
    <property type="resolution" value="1.71 A"/>
    <property type="chains" value="A/B=2917-3037"/>
</dbReference>
<dbReference type="PDB" id="7KDZ">
    <property type="method" value="X-ray"/>
    <property type="resolution" value="1.54 A"/>
    <property type="chains" value="A=2917-3037"/>
</dbReference>
<dbReference type="PDB" id="7LP0">
    <property type="method" value="X-ray"/>
    <property type="resolution" value="1.66 A"/>
    <property type="chains" value="A/B=2917-3037"/>
</dbReference>
<dbReference type="PDB" id="7LPK">
    <property type="method" value="X-ray"/>
    <property type="resolution" value="1.39 A"/>
    <property type="chains" value="A/B=2917-3037"/>
</dbReference>
<dbReference type="PDB" id="7LRK">
    <property type="method" value="X-ray"/>
    <property type="resolution" value="1.44 A"/>
    <property type="chains" value="A/B=2917-3037"/>
</dbReference>
<dbReference type="PDB" id="7LRO">
    <property type="method" value="X-ray"/>
    <property type="resolution" value="1.45 A"/>
    <property type="chains" value="A/B=2917-3037"/>
</dbReference>
<dbReference type="PDB" id="7M2E">
    <property type="method" value="X-ray"/>
    <property type="resolution" value="1.75 A"/>
    <property type="chains" value="A=2917-3037"/>
</dbReference>
<dbReference type="PDB" id="7RWN">
    <property type="method" value="X-ray"/>
    <property type="resolution" value="1.39 A"/>
    <property type="chains" value="A=2917-3037"/>
</dbReference>
<dbReference type="PDB" id="7RWO">
    <property type="method" value="X-ray"/>
    <property type="resolution" value="1.58 A"/>
    <property type="chains" value="A=2917-3037"/>
</dbReference>
<dbReference type="PDB" id="7RWP">
    <property type="method" value="X-ray"/>
    <property type="resolution" value="1.73 A"/>
    <property type="chains" value="A=2917-3037"/>
</dbReference>
<dbReference type="PDB" id="7RWQ">
    <property type="method" value="X-ray"/>
    <property type="resolution" value="1.90 A"/>
    <property type="chains" value="A=2917-3037"/>
</dbReference>
<dbReference type="PDB" id="7VD4">
    <property type="method" value="X-ray"/>
    <property type="resolution" value="1.86 A"/>
    <property type="chains" value="A=2924-3033"/>
</dbReference>
<dbReference type="PDB" id="8AG2">
    <property type="method" value="X-ray"/>
    <property type="resolution" value="1.02 A"/>
    <property type="chains" value="A=2917-3037"/>
</dbReference>
<dbReference type="PDB" id="8F6G">
    <property type="method" value="X-ray"/>
    <property type="resolution" value="1.95 A"/>
    <property type="chains" value="A=2917-3037"/>
</dbReference>
<dbReference type="PDB" id="8OU2">
    <property type="method" value="X-ray"/>
    <property type="resolution" value="1.60 A"/>
    <property type="chains" value="A/B=2917-3037"/>
</dbReference>
<dbReference type="PDBsum" id="2F6J"/>
<dbReference type="PDBsum" id="2F6N"/>
<dbReference type="PDBsum" id="2FSA"/>
<dbReference type="PDBsum" id="2FUI"/>
<dbReference type="PDBsum" id="2FUU"/>
<dbReference type="PDBsum" id="2RI7"/>
<dbReference type="PDBsum" id="3QZS"/>
<dbReference type="PDBsum" id="3QZT"/>
<dbReference type="PDBsum" id="3QZV"/>
<dbReference type="PDBsum" id="3UV2"/>
<dbReference type="PDBsum" id="5H6Y"/>
<dbReference type="PDBsum" id="5R4G"/>
<dbReference type="PDBsum" id="5R4H"/>
<dbReference type="PDBsum" id="5R4I"/>
<dbReference type="PDBsum" id="5R4J"/>
<dbReference type="PDBsum" id="5R4K"/>
<dbReference type="PDBsum" id="5R4L"/>
<dbReference type="PDBsum" id="5R4M"/>
<dbReference type="PDBsum" id="5R4N"/>
<dbReference type="PDBsum" id="5R4O"/>
<dbReference type="PDBsum" id="6AZE"/>
<dbReference type="PDBsum" id="6LU5"/>
<dbReference type="PDBsum" id="6LU6"/>
<dbReference type="PDBsum" id="7DMY"/>
<dbReference type="PDBsum" id="7DN4"/>
<dbReference type="PDBsum" id="7F5D"/>
<dbReference type="PDBsum" id="7F5E"/>
<dbReference type="PDBsum" id="7JT4"/>
<dbReference type="PDBsum" id="7K6R"/>
<dbReference type="PDBsum" id="7K6S"/>
<dbReference type="PDBsum" id="7KDW"/>
<dbReference type="PDBsum" id="7KDZ"/>
<dbReference type="PDBsum" id="7LP0"/>
<dbReference type="PDBsum" id="7LPK"/>
<dbReference type="PDBsum" id="7LRK"/>
<dbReference type="PDBsum" id="7LRO"/>
<dbReference type="PDBsum" id="7M2E"/>
<dbReference type="PDBsum" id="7RWN"/>
<dbReference type="PDBsum" id="7RWO"/>
<dbReference type="PDBsum" id="7RWP"/>
<dbReference type="PDBsum" id="7RWQ"/>
<dbReference type="PDBsum" id="7VD4"/>
<dbReference type="PDBsum" id="8AG2"/>
<dbReference type="PDBsum" id="8F6G"/>
<dbReference type="PDBsum" id="8OU2"/>
<dbReference type="SMR" id="Q12830"/>
<dbReference type="BioGRID" id="108481">
    <property type="interactions" value="204"/>
</dbReference>
<dbReference type="ComplexPortal" id="CPX-688">
    <property type="entry name" value="NuRF chromatin remodeling complex"/>
</dbReference>
<dbReference type="CORUM" id="Q12830"/>
<dbReference type="DIP" id="DIP-38919N"/>
<dbReference type="ELM" id="Q12830"/>
<dbReference type="FunCoup" id="Q12830">
    <property type="interactions" value="4288"/>
</dbReference>
<dbReference type="IntAct" id="Q12830">
    <property type="interactions" value="77"/>
</dbReference>
<dbReference type="MINT" id="Q12830"/>
<dbReference type="STRING" id="9606.ENSP00000307208"/>
<dbReference type="BindingDB" id="Q12830"/>
<dbReference type="ChEMBL" id="CHEMBL3085621"/>
<dbReference type="GuidetoPHARMACOLOGY" id="2723"/>
<dbReference type="GlyConnect" id="2901">
    <property type="glycosylation" value="1 O-GlcNAc glycan (5 sites)"/>
</dbReference>
<dbReference type="GlyCosmos" id="Q12830">
    <property type="glycosylation" value="26 sites, 2 glycans"/>
</dbReference>
<dbReference type="GlyGen" id="Q12830">
    <property type="glycosylation" value="74 sites, 2 O-linked glycans (71 sites)"/>
</dbReference>
<dbReference type="iPTMnet" id="Q12830"/>
<dbReference type="PhosphoSitePlus" id="Q12830"/>
<dbReference type="SwissPalm" id="Q12830"/>
<dbReference type="BioMuta" id="BPTF"/>
<dbReference type="DMDM" id="215274183"/>
<dbReference type="jPOST" id="Q12830"/>
<dbReference type="MassIVE" id="Q12830"/>
<dbReference type="PaxDb" id="9606-ENSP00000307208"/>
<dbReference type="PeptideAtlas" id="Q12830"/>
<dbReference type="ProteomicsDB" id="58973">
    <molecule id="Q12830-1"/>
</dbReference>
<dbReference type="ProteomicsDB" id="58974">
    <molecule id="Q12830-2"/>
</dbReference>
<dbReference type="ProteomicsDB" id="58975">
    <molecule id="Q12830-4"/>
</dbReference>
<dbReference type="Pumba" id="Q12830"/>
<dbReference type="ABCD" id="Q12830">
    <property type="antibodies" value="1 sequenced antibody"/>
</dbReference>
<dbReference type="Antibodypedia" id="19216">
    <property type="antibodies" value="106 antibodies from 26 providers"/>
</dbReference>
<dbReference type="DNASU" id="2186"/>
<dbReference type="Ensembl" id="ENST00000306378.11">
    <molecule id="Q12830-2"/>
    <property type="protein sequence ID" value="ENSP00000307208.6"/>
    <property type="gene ID" value="ENSG00000171634.19"/>
</dbReference>
<dbReference type="Ensembl" id="ENST00000321892.8">
    <molecule id="Q12830-1"/>
    <property type="protein sequence ID" value="ENSP00000315454.4"/>
    <property type="gene ID" value="ENSG00000171634.19"/>
</dbReference>
<dbReference type="GeneID" id="2186"/>
<dbReference type="KEGG" id="hsa:2186"/>
<dbReference type="MANE-Select" id="ENST00000306378.11">
    <molecule id="Q12830-2"/>
    <property type="protein sequence ID" value="ENSP00000307208.6"/>
    <property type="RefSeq nucleotide sequence ID" value="NM_182641.4"/>
    <property type="RefSeq protein sequence ID" value="NP_872579.2"/>
</dbReference>
<dbReference type="UCSC" id="uc002jgf.4">
    <molecule id="Q12830-1"/>
    <property type="organism name" value="human"/>
</dbReference>
<dbReference type="AGR" id="HGNC:3581"/>
<dbReference type="CTD" id="2186"/>
<dbReference type="DisGeNET" id="2186"/>
<dbReference type="GeneCards" id="BPTF"/>
<dbReference type="HGNC" id="HGNC:3581">
    <property type="gene designation" value="BPTF"/>
</dbReference>
<dbReference type="HPA" id="ENSG00000171634">
    <property type="expression patterns" value="Low tissue specificity"/>
</dbReference>
<dbReference type="MalaCards" id="BPTF"/>
<dbReference type="MIM" id="601819">
    <property type="type" value="gene"/>
</dbReference>
<dbReference type="MIM" id="617755">
    <property type="type" value="phenotype"/>
</dbReference>
<dbReference type="neXtProt" id="NX_Q12830"/>
<dbReference type="OpenTargets" id="ENSG00000171634"/>
<dbReference type="Orphanet" id="529962">
    <property type="disease" value="17q24.2 microdeletion syndrome"/>
</dbReference>
<dbReference type="Orphanet" id="686482">
    <property type="disease" value="BPTF-related intellectual disability-facial dysmorphism-skeletal anomalies syndrome"/>
</dbReference>
<dbReference type="PharmGKB" id="PA162377557"/>
<dbReference type="VEuPathDB" id="HostDB:ENSG00000171634"/>
<dbReference type="eggNOG" id="KOG1473">
    <property type="taxonomic scope" value="Eukaryota"/>
</dbReference>
<dbReference type="eggNOG" id="KOG1632">
    <property type="taxonomic scope" value="Eukaryota"/>
</dbReference>
<dbReference type="eggNOG" id="KOG1827">
    <property type="taxonomic scope" value="Eukaryota"/>
</dbReference>
<dbReference type="GeneTree" id="ENSGT00940000154830"/>
<dbReference type="HOGENOM" id="CLU_000284_1_0_1"/>
<dbReference type="InParanoid" id="Q12830"/>
<dbReference type="OMA" id="PEQYTNV"/>
<dbReference type="OrthoDB" id="784962at2759"/>
<dbReference type="PAN-GO" id="Q12830">
    <property type="GO annotations" value="4 GO annotations based on evolutionary models"/>
</dbReference>
<dbReference type="PhylomeDB" id="Q12830"/>
<dbReference type="TreeFam" id="TF316840"/>
<dbReference type="PathwayCommons" id="Q12830"/>
<dbReference type="SignaLink" id="Q12830"/>
<dbReference type="SIGNOR" id="Q12830"/>
<dbReference type="BioGRID-ORCS" id="2186">
    <property type="hits" value="263 hits in 1191 CRISPR screens"/>
</dbReference>
<dbReference type="ChiTaRS" id="BPTF">
    <property type="organism name" value="human"/>
</dbReference>
<dbReference type="EvolutionaryTrace" id="Q12830"/>
<dbReference type="GeneWiki" id="BPTF"/>
<dbReference type="GenomeRNAi" id="2186"/>
<dbReference type="Pharos" id="Q12830">
    <property type="development level" value="Tchem"/>
</dbReference>
<dbReference type="PRO" id="PR:Q12830"/>
<dbReference type="Proteomes" id="UP000005640">
    <property type="component" value="Chromosome 17"/>
</dbReference>
<dbReference type="RNAct" id="Q12830">
    <property type="molecule type" value="protein"/>
</dbReference>
<dbReference type="Bgee" id="ENSG00000171634">
    <property type="expression patterns" value="Expressed in sural nerve and 204 other cell types or tissues"/>
</dbReference>
<dbReference type="ExpressionAtlas" id="Q12830">
    <property type="expression patterns" value="baseline and differential"/>
</dbReference>
<dbReference type="GO" id="GO:1904949">
    <property type="term" value="C:ATPase complex"/>
    <property type="evidence" value="ECO:0000314"/>
    <property type="project" value="ComplexPortal"/>
</dbReference>
<dbReference type="GO" id="GO:0044297">
    <property type="term" value="C:cell body"/>
    <property type="evidence" value="ECO:0007669"/>
    <property type="project" value="Ensembl"/>
</dbReference>
<dbReference type="GO" id="GO:0000785">
    <property type="term" value="C:chromatin"/>
    <property type="evidence" value="ECO:0000314"/>
    <property type="project" value="ParkinsonsUK-UCL"/>
</dbReference>
<dbReference type="GO" id="GO:0005737">
    <property type="term" value="C:cytoplasm"/>
    <property type="evidence" value="ECO:0000304"/>
    <property type="project" value="ProtInc"/>
</dbReference>
<dbReference type="GO" id="GO:0030425">
    <property type="term" value="C:dendrite"/>
    <property type="evidence" value="ECO:0007669"/>
    <property type="project" value="Ensembl"/>
</dbReference>
<dbReference type="GO" id="GO:0070062">
    <property type="term" value="C:extracellular exosome"/>
    <property type="evidence" value="ECO:0007005"/>
    <property type="project" value="UniProtKB"/>
</dbReference>
<dbReference type="GO" id="GO:0005654">
    <property type="term" value="C:nucleoplasm"/>
    <property type="evidence" value="ECO:0000314"/>
    <property type="project" value="HPA"/>
</dbReference>
<dbReference type="GO" id="GO:0005634">
    <property type="term" value="C:nucleus"/>
    <property type="evidence" value="ECO:0000314"/>
    <property type="project" value="UniProtKB"/>
</dbReference>
<dbReference type="GO" id="GO:0016589">
    <property type="term" value="C:NURF complex"/>
    <property type="evidence" value="ECO:0000314"/>
    <property type="project" value="UniProtKB"/>
</dbReference>
<dbReference type="GO" id="GO:0048471">
    <property type="term" value="C:perinuclear region of cytoplasm"/>
    <property type="evidence" value="ECO:0007669"/>
    <property type="project" value="Ensembl"/>
</dbReference>
<dbReference type="GO" id="GO:0035064">
    <property type="term" value="F:methylated histone binding"/>
    <property type="evidence" value="ECO:0000318"/>
    <property type="project" value="GO_Central"/>
</dbReference>
<dbReference type="GO" id="GO:0000978">
    <property type="term" value="F:RNA polymerase II cis-regulatory region sequence-specific DNA binding"/>
    <property type="evidence" value="ECO:0000318"/>
    <property type="project" value="GO_Central"/>
</dbReference>
<dbReference type="GO" id="GO:0043565">
    <property type="term" value="F:sequence-specific DNA binding"/>
    <property type="evidence" value="ECO:0000314"/>
    <property type="project" value="HGNC-UCL"/>
</dbReference>
<dbReference type="GO" id="GO:0008270">
    <property type="term" value="F:zinc ion binding"/>
    <property type="evidence" value="ECO:0007669"/>
    <property type="project" value="UniProtKB-KW"/>
</dbReference>
<dbReference type="GO" id="GO:0009952">
    <property type="term" value="P:anterior/posterior pattern specification"/>
    <property type="evidence" value="ECO:0007669"/>
    <property type="project" value="Ensembl"/>
</dbReference>
<dbReference type="GO" id="GO:0007420">
    <property type="term" value="P:brain development"/>
    <property type="evidence" value="ECO:0000315"/>
    <property type="project" value="HGNC-UCL"/>
</dbReference>
<dbReference type="GO" id="GO:1990090">
    <property type="term" value="P:cellular response to nerve growth factor stimulus"/>
    <property type="evidence" value="ECO:0007669"/>
    <property type="project" value="Ensembl"/>
</dbReference>
<dbReference type="GO" id="GO:0006338">
    <property type="term" value="P:chromatin remodeling"/>
    <property type="evidence" value="ECO:0000314"/>
    <property type="project" value="HGNC-UCL"/>
</dbReference>
<dbReference type="GO" id="GO:0001892">
    <property type="term" value="P:embryonic placenta development"/>
    <property type="evidence" value="ECO:0007669"/>
    <property type="project" value="Ensembl"/>
</dbReference>
<dbReference type="GO" id="GO:0007492">
    <property type="term" value="P:endoderm development"/>
    <property type="evidence" value="ECO:0007669"/>
    <property type="project" value="Ensembl"/>
</dbReference>
<dbReference type="GO" id="GO:0000122">
    <property type="term" value="P:negative regulation of transcription by RNA polymerase II"/>
    <property type="evidence" value="ECO:0000314"/>
    <property type="project" value="MGI"/>
</dbReference>
<dbReference type="GO" id="GO:0045944">
    <property type="term" value="P:positive regulation of transcription by RNA polymerase II"/>
    <property type="evidence" value="ECO:0000315"/>
    <property type="project" value="HGNC-UCL"/>
</dbReference>
<dbReference type="GO" id="GO:0006355">
    <property type="term" value="P:regulation of DNA-templated transcription"/>
    <property type="evidence" value="ECO:0000314"/>
    <property type="project" value="ComplexPortal"/>
</dbReference>
<dbReference type="GO" id="GO:0006357">
    <property type="term" value="P:regulation of transcription by RNA polymerase II"/>
    <property type="evidence" value="ECO:0000315"/>
    <property type="project" value="HGNC-UCL"/>
</dbReference>
<dbReference type="CDD" id="cd05509">
    <property type="entry name" value="Bromo_gcn5_like"/>
    <property type="match status" value="1"/>
</dbReference>
<dbReference type="CDD" id="cd15559">
    <property type="entry name" value="PHD1_BPTF"/>
    <property type="match status" value="1"/>
</dbReference>
<dbReference type="CDD" id="cd15560">
    <property type="entry name" value="PHD2_3_BPTF"/>
    <property type="match status" value="1"/>
</dbReference>
<dbReference type="FunFam" id="1.20.920.10:FF:000018">
    <property type="entry name" value="nucleosome-remodeling factor subunit BPTF isoform X1"/>
    <property type="match status" value="1"/>
</dbReference>
<dbReference type="FunFam" id="3.30.40.10:FF:000036">
    <property type="entry name" value="nucleosome-remodeling factor subunit BPTF isoform X1"/>
    <property type="match status" value="1"/>
</dbReference>
<dbReference type="FunFam" id="3.30.40.10:FF:000048">
    <property type="entry name" value="nucleosome-remodeling factor subunit BPTF isoform X1"/>
    <property type="match status" value="1"/>
</dbReference>
<dbReference type="Gene3D" id="1.20.920.10">
    <property type="entry name" value="Bromodomain-like"/>
    <property type="match status" value="1"/>
</dbReference>
<dbReference type="Gene3D" id="3.30.40.10">
    <property type="entry name" value="Zinc/RING finger domain, C3HC4 (zinc finger)"/>
    <property type="match status" value="2"/>
</dbReference>
<dbReference type="IDEAL" id="IID00071"/>
<dbReference type="InterPro" id="IPR038028">
    <property type="entry name" value="BPTF"/>
</dbReference>
<dbReference type="InterPro" id="IPR001487">
    <property type="entry name" value="Bromodomain"/>
</dbReference>
<dbReference type="InterPro" id="IPR036427">
    <property type="entry name" value="Bromodomain-like_sf"/>
</dbReference>
<dbReference type="InterPro" id="IPR018359">
    <property type="entry name" value="Bromodomain_CS"/>
</dbReference>
<dbReference type="InterPro" id="IPR018501">
    <property type="entry name" value="DDT_dom"/>
</dbReference>
<dbReference type="InterPro" id="IPR028941">
    <property type="entry name" value="WHIM2_dom"/>
</dbReference>
<dbReference type="InterPro" id="IPR019786">
    <property type="entry name" value="Zinc_finger_PHD-type_CS"/>
</dbReference>
<dbReference type="InterPro" id="IPR011011">
    <property type="entry name" value="Znf_FYVE_PHD"/>
</dbReference>
<dbReference type="InterPro" id="IPR001965">
    <property type="entry name" value="Znf_PHD"/>
</dbReference>
<dbReference type="InterPro" id="IPR019787">
    <property type="entry name" value="Znf_PHD-finger"/>
</dbReference>
<dbReference type="InterPro" id="IPR013083">
    <property type="entry name" value="Znf_RING/FYVE/PHD"/>
</dbReference>
<dbReference type="PANTHER" id="PTHR45975">
    <property type="entry name" value="NUCLEOSOME-REMODELING FACTOR SUBUNIT BPTF"/>
    <property type="match status" value="1"/>
</dbReference>
<dbReference type="PANTHER" id="PTHR45975:SF2">
    <property type="entry name" value="NUCLEOSOME-REMODELING FACTOR SUBUNIT BPTF"/>
    <property type="match status" value="1"/>
</dbReference>
<dbReference type="Pfam" id="PF00439">
    <property type="entry name" value="Bromodomain"/>
    <property type="match status" value="1"/>
</dbReference>
<dbReference type="Pfam" id="PF02791">
    <property type="entry name" value="DDT"/>
    <property type="match status" value="1"/>
</dbReference>
<dbReference type="Pfam" id="PF00628">
    <property type="entry name" value="PHD"/>
    <property type="match status" value="2"/>
</dbReference>
<dbReference type="Pfam" id="PF15613">
    <property type="entry name" value="WSD"/>
    <property type="match status" value="1"/>
</dbReference>
<dbReference type="PRINTS" id="PR00503">
    <property type="entry name" value="BROMODOMAIN"/>
</dbReference>
<dbReference type="SMART" id="SM00297">
    <property type="entry name" value="BROMO"/>
    <property type="match status" value="1"/>
</dbReference>
<dbReference type="SMART" id="SM00571">
    <property type="entry name" value="DDT"/>
    <property type="match status" value="1"/>
</dbReference>
<dbReference type="SMART" id="SM00249">
    <property type="entry name" value="PHD"/>
    <property type="match status" value="2"/>
</dbReference>
<dbReference type="SUPFAM" id="SSF47370">
    <property type="entry name" value="Bromodomain"/>
    <property type="match status" value="1"/>
</dbReference>
<dbReference type="SUPFAM" id="SSF57903">
    <property type="entry name" value="FYVE/PHD zinc finger"/>
    <property type="match status" value="2"/>
</dbReference>
<dbReference type="PROSITE" id="PS00633">
    <property type="entry name" value="BROMODOMAIN_1"/>
    <property type="match status" value="1"/>
</dbReference>
<dbReference type="PROSITE" id="PS50014">
    <property type="entry name" value="BROMODOMAIN_2"/>
    <property type="match status" value="1"/>
</dbReference>
<dbReference type="PROSITE" id="PS50827">
    <property type="entry name" value="DDT"/>
    <property type="match status" value="1"/>
</dbReference>
<dbReference type="PROSITE" id="PS01359">
    <property type="entry name" value="ZF_PHD_1"/>
    <property type="match status" value="2"/>
</dbReference>
<dbReference type="PROSITE" id="PS50016">
    <property type="entry name" value="ZF_PHD_2"/>
    <property type="match status" value="2"/>
</dbReference>